<organism>
    <name type="scientific">Homo sapiens</name>
    <name type="common">Human</name>
    <dbReference type="NCBI Taxonomy" id="9606"/>
    <lineage>
        <taxon>Eukaryota</taxon>
        <taxon>Metazoa</taxon>
        <taxon>Chordata</taxon>
        <taxon>Craniata</taxon>
        <taxon>Vertebrata</taxon>
        <taxon>Euteleostomi</taxon>
        <taxon>Mammalia</taxon>
        <taxon>Eutheria</taxon>
        <taxon>Euarchontoglires</taxon>
        <taxon>Primates</taxon>
        <taxon>Haplorrhini</taxon>
        <taxon>Catarrhini</taxon>
        <taxon>Hominidae</taxon>
        <taxon>Homo</taxon>
    </lineage>
</organism>
<feature type="chain" id="PRO_0000168165" description="Reticulon-4">
    <location>
        <begin position="1"/>
        <end position="1192"/>
    </location>
</feature>
<feature type="topological domain" description="Cytoplasmic" evidence="3">
    <location>
        <begin position="1"/>
        <end position="1018"/>
    </location>
</feature>
<feature type="transmembrane region" description="Helical" evidence="3">
    <location>
        <begin position="1019"/>
        <end position="1039"/>
    </location>
</feature>
<feature type="topological domain" description="Lumenal" evidence="3">
    <location>
        <begin position="1040"/>
        <end position="1133"/>
    </location>
</feature>
<feature type="transmembrane region" description="Helical" evidence="3">
    <location>
        <begin position="1134"/>
        <end position="1154"/>
    </location>
</feature>
<feature type="topological domain" description="Cytoplasmic" evidence="3">
    <location>
        <begin position="1155"/>
        <end position="1192"/>
    </location>
</feature>
<feature type="domain" description="Reticulon" evidence="4">
    <location>
        <begin position="1005"/>
        <end position="1192"/>
    </location>
</feature>
<feature type="region of interest" description="Disordered" evidence="5">
    <location>
        <begin position="1"/>
        <end position="204"/>
    </location>
</feature>
<feature type="region of interest" description="Disordered" evidence="5">
    <location>
        <begin position="427"/>
        <end position="458"/>
    </location>
</feature>
<feature type="region of interest" description="Disordered" evidence="5">
    <location>
        <begin position="722"/>
        <end position="762"/>
    </location>
</feature>
<feature type="compositionally biased region" description="Acidic residues" evidence="5">
    <location>
        <begin position="31"/>
        <end position="53"/>
    </location>
</feature>
<feature type="compositionally biased region" description="Low complexity" evidence="5">
    <location>
        <begin position="65"/>
        <end position="77"/>
    </location>
</feature>
<feature type="compositionally biased region" description="Pro residues" evidence="5">
    <location>
        <begin position="87"/>
        <end position="101"/>
    </location>
</feature>
<feature type="compositionally biased region" description="Low complexity" evidence="5">
    <location>
        <begin position="110"/>
        <end position="132"/>
    </location>
</feature>
<feature type="compositionally biased region" description="Pro residues" evidence="5">
    <location>
        <begin position="141"/>
        <end position="150"/>
    </location>
</feature>
<feature type="compositionally biased region" description="Pro residues" evidence="5">
    <location>
        <begin position="159"/>
        <end position="173"/>
    </location>
</feature>
<feature type="compositionally biased region" description="Basic and acidic residues" evidence="5">
    <location>
        <begin position="722"/>
        <end position="734"/>
    </location>
</feature>
<feature type="compositionally biased region" description="Acidic residues" evidence="5">
    <location>
        <begin position="735"/>
        <end position="753"/>
    </location>
</feature>
<feature type="modified residue" description="N-acetylmethionine" evidence="28 48 49 51 52 53 54 56">
    <location>
        <position position="1"/>
    </location>
</feature>
<feature type="modified residue" description="Phosphoserine" evidence="46 51 55">
    <location>
        <position position="7"/>
    </location>
</feature>
<feature type="modified residue" description="Phosphoserine" evidence="28 51 52 55">
    <location>
        <position position="15"/>
    </location>
</feature>
<feature type="modified residue" description="Phosphoserine" evidence="46 52">
    <location>
        <position position="107"/>
    </location>
</feature>
<feature type="modified residue" description="Phosphoserine" evidence="1">
    <location>
        <position position="152"/>
    </location>
</feature>
<feature type="modified residue" description="Phosphoserine" evidence="47 55">
    <location>
        <position position="181"/>
    </location>
</feature>
<feature type="modified residue" description="Phosphoserine" evidence="47">
    <location>
        <position position="182"/>
    </location>
</feature>
<feature type="modified residue" description="Phosphoserine" evidence="1">
    <location>
        <position position="184"/>
    </location>
</feature>
<feature type="modified residue" description="Phosphoserine" evidence="1">
    <location>
        <position position="361"/>
    </location>
</feature>
<feature type="modified residue" description="Phosphoserine" evidence="2">
    <location>
        <position position="446"/>
    </location>
</feature>
<feature type="modified residue" description="Phosphothreonine" evidence="2">
    <location>
        <position position="450"/>
    </location>
</feature>
<feature type="modified residue" description="Phosphoserine" evidence="1">
    <location>
        <position position="511"/>
    </location>
</feature>
<feature type="modified residue" description="Phosphoserine" evidence="1">
    <location>
        <position position="749"/>
    </location>
</feature>
<feature type="modified residue" description="Phosphothreonine" evidence="2">
    <location>
        <position position="858"/>
    </location>
</feature>
<feature type="modified residue" description="Phosphoserine" evidence="1">
    <location>
        <position position="881"/>
    </location>
</feature>
<feature type="modified residue" description="Phosphoserine" evidence="55">
    <location>
        <position position="991"/>
    </location>
</feature>
<feature type="modified residue" description="N6-acetyllysine" evidence="50">
    <location>
        <position position="1104"/>
    </location>
</feature>
<feature type="splice variant" id="VSP_005652" description="In isoform C." evidence="29 30 31 34 36 37 40 41">
    <location>
        <begin position="1"/>
        <end position="993"/>
    </location>
</feature>
<feature type="splice variant" id="VSP_037112" description="In isoform D." evidence="33 34">
    <location>
        <begin position="1"/>
        <end position="206"/>
    </location>
</feature>
<feature type="splice variant" id="VSP_005654" description="In isoform 6." evidence="34 42">
    <location>
        <begin position="58"/>
        <end position="289"/>
    </location>
</feature>
<feature type="splice variant" id="VSP_005655" description="In isoform B." evidence="29 30 32 34 36 39 41">
    <location>
        <begin position="186"/>
        <end position="1004"/>
    </location>
</feature>
<feature type="splice variant" id="VSP_037113" description="In isoform B2." evidence="34 36">
    <location>
        <begin position="205"/>
        <end position="1004"/>
    </location>
</feature>
<feature type="splice variant" id="VSP_005653" description="In isoform C." evidence="29 30 31 34 36 37 40 41">
    <original>AIFSAELSKTS</original>
    <variation>MDGQKKNWKDK</variation>
    <location>
        <begin position="994"/>
        <end position="1004"/>
    </location>
</feature>
<feature type="sequence variant" id="VAR_053633" description="In dbSNP:rs11677099.">
    <original>D</original>
    <variation>V</variation>
    <location>
        <position position="357"/>
    </location>
</feature>
<feature type="sequence variant" id="VAR_035904" description="In a colorectal cancer sample; somatic mutation." evidence="14">
    <original>L</original>
    <variation>V</variation>
    <location>
        <position position="429"/>
    </location>
</feature>
<feature type="sequence variant" id="VAR_053634" description="In dbSNP:rs6757519.">
    <original>E</original>
    <variation>Q</variation>
    <location>
        <position position="899"/>
    </location>
</feature>
<feature type="sequence variant" id="VAR_053635" description="In dbSNP:rs6757705.">
    <original>S</original>
    <variation>C</variation>
    <location>
        <position position="920"/>
    </location>
</feature>
<feature type="sequence conflict" description="In Ref. 6; BAA83712." evidence="43" ref="6">
    <original>S</original>
    <variation>C</variation>
    <location>
        <position position="107"/>
    </location>
</feature>
<feature type="sequence conflict" description="In Ref. 6; BAA83712." evidence="43" ref="6">
    <original>E</original>
    <variation>Q</variation>
    <location>
        <position position="135"/>
    </location>
</feature>
<feature type="sequence conflict" description="In Ref. 2; CAB99248." evidence="43" ref="2">
    <original>S</original>
    <variation>P</variation>
    <location>
        <position position="458"/>
    </location>
</feature>
<feature type="sequence conflict" description="In Ref. 4; AAK20831." evidence="43" ref="4">
    <original>N</original>
    <variation>S</variation>
    <location>
        <position position="564"/>
    </location>
</feature>
<feature type="turn" evidence="57">
    <location>
        <begin position="1059"/>
        <end position="1062"/>
    </location>
</feature>
<feature type="helix" evidence="57">
    <location>
        <begin position="1063"/>
        <end position="1070"/>
    </location>
</feature>
<feature type="helix" evidence="57">
    <location>
        <begin position="1074"/>
        <end position="1094"/>
    </location>
</feature>
<feature type="helix" evidence="57">
    <location>
        <begin position="1095"/>
        <end position="1097"/>
    </location>
</feature>
<feature type="helix" evidence="57">
    <location>
        <begin position="1100"/>
        <end position="1107"/>
    </location>
</feature>
<sequence>MEDLDQSPLVSSSDSPPRPQPAFKYQFVREPEDEEEEEEEEEEDEDEDLEELEVLERKPAAGLSAAPVPTAPAAGAPLMDFGNDFVPPAPRGPLPAAPPVAPERQPSWDPSPVSSTVPAPSPLSAAAVSPSKLPEDDEPPARPPPPPPASVSPQAEPVWTPPAPAPAAPPSTPAAPKRRGSSGSVDETLFALPAASEPVIRSSAENMDLKEQPGNTISAGQEDFPSVLLETAASLPSLSPLSAASFKEHEYLGNLSTVLPTEGTLQENVSEASKEVSEKAKTLLIDRDLTEFSELEYSEMGSSFSVSPKAESAVIVANPREEIIVKNKDEEEKLVSNNILHNQQELPTALTKLVKEDEVVSSEKAKDSFNEKRVAVEAPMREEYADFKPFERVWEVKDSKEDSDMLAAGGKIESNLESKVDKKCFADSLEQTNHEKDSESSNDDTSFPSTPEGIKDRSGAYITCAPFNPAATESIATNIFPLLGDPTSENKTDEKKIEEKKAQIVTEKNTSTKTSNPFLVAAQDSETDYVTTDNLTKVTEEVVANMPEGLTPDLVQEACESELNEVTGTKIAYETKMDLVQTSEVMQESLYPAAQLCPSFEESEATPSPVLPDIVMEAPLNSAVPSAGASVIQPSSSPLEASSVNYESIKHEPENPPPYEEAMSVSLKKVSGIKEEIKEPENINAALQETEAPYISIACDLIKETKLSAEPAPDFSDYSEMAKVEQPVPDHSELVEDSSPDSEPVDLFSDDSIPDVPQKQDETVMLVKESLTETSFESMIEYENKEKLSALPPEGGKPYLESFKLSLDNTKDTLLPDEVSTLSKKEKIPLQMEELSTAVYSNDDLFISKEAQIRETETFSDSSPIEIIDEFPTLISSKTDSFSKLAREYTDLEVSHKSEIANAPDGAGSLPCTELPHDLSLKNIQPKVEEKISFSDDFSKNGSATSKVLLLPPDVSALATQAEIESIVKPKVLVKEAEKKLPSDTEKEDRSPSAIFSAELSKTSVVDLLYWRDIKKTGVVFGASLFLLLSLTVFSIVSVTAYIALALLSVTISFRIYKGVIQAIQKSDEGHPFRAYLESEVAISEELVQKYSNSALGHVNCTIKELRRLFLVDDLVDSLKFAVLMWVFTYVGALFNGLTLLILALISLFSVPVIYERHQAQIDHYLGLANKNVKDAMAKIQAKIPGLKRKAE</sequence>
<proteinExistence type="evidence at protein level"/>
<comment type="function">
    <text evidence="21 22 23 24 25 43">Required to induce the formation and stabilization of endoplasmic reticulum (ER) tubules (PubMed:24262037, PubMed:25612671, PubMed:27619977). They regulate membrane morphogenesis in the ER by promoting tubular ER production (PubMed:24262037, PubMed:25612671, PubMed:27619977, PubMed:27786289). They influence nuclear envelope expansion, nuclear pore complex formation and proper localization of inner nuclear membrane proteins (PubMed:26906412). However each isoform have specific functions mainly depending on their tissue expression specificities (Probable).</text>
</comment>
<comment type="function">
    <molecule>Isoform A</molecule>
    <text evidence="1 6 8 19">Developmental neurite growth regulatory factor with a role as a negative regulator of axon-axon adhesion and growth, and as a facilitator of neurite branching. Regulates neurite fasciculation, branching and extension in the developing nervous system. Involved in down-regulation of growth, stabilization of wiring and restriction of plasticity in the adult CNS (PubMed:10667797, PubMed:11201742). Regulates the radial migration of cortical neurons via an RTN4R-LINGO1 containing receptor complex (By similarity). Acts as a negative regulator of central nervous system angiogenesis. Inhibits spreading, migration and sprouting of primary brain microvascular endothelial cells (MVECs). Also induces the retraction of MVECs lamellipodia and filopodia in a ROCK pathway-dependent manner (By similarity).</text>
</comment>
<comment type="function">
    <molecule>Isoform B</molecule>
    <text evidence="1 7 15 43">Mainly function in endothelial cells and vascular smooth muscle cells, is also involved in immune system regulation (Probable). Modulator of vascular remodeling, promotes the migration of endothelial cells but inhibits the migration of vascular smooth muscle cells. Regulates endothelial sphingolipid biosynthesis with direct effects on vascular function and blood pressure. Inhibits serine palmitoyltransferase, SPTLC1, the rate-limiting enzyme of the novo sphingolipid biosynthetic pathway, thereby controlling production of endothelial sphingosine-1-phosphate (S1P). Required to promote macrophage homing and functions such as cytokine/chemokine gene expression involved in angiogenesis, arteriogenesis and tissue repair. Mediates ICAM1 induced transendothelial migration of leukocytes such as monocytes and neutrophils and acute inflammation. Necessary for immune responses triggered by nucleic acid sensing TLRs, such as TLR9, is required for proper TLR9 location to endolysosomes. Also involved in immune response to LPS. Plays a role in liver regeneration through the modulation of hepatocytes proliferation (By similarity). Reduces the anti-apoptotic activity of Bcl-xl and Bcl-2. This is likely consecutive to their change in subcellular location, from the mitochondria to the endoplasmic reticulum, after binding and sequestration (PubMed:11126360). With isoform C, inhibits BACE1 activity and amyloid precursor protein processing (PubMed:16965550).</text>
</comment>
<comment type="function">
    <molecule>Isoform C</molecule>
    <text evidence="1 15">Regulates cardiomyocyte apoptosis upon hypoxic conditions (By similarity). With isoform B, inhibits BACE1 activity and amyloid precursor protein processing (PubMed:16965550).</text>
</comment>
<comment type="subunit">
    <text evidence="1 17 18 23">Binds to RTN4R (PubMed:19052207). Interacts with ATL1 (PubMed:19665976). Interacts with TMEM170A (PubMed:19665976, PubMed:26906412). Interacts with RTN4IP1 (By similarity).</text>
</comment>
<comment type="subunit">
    <molecule>Isoform A</molecule>
    <text evidence="1 2 19 26">Interacts in trans with CNTNAP1 (By similarity). Interacts with REEP5 (PubMed:32075961). Interacts with synaptic plasticity regulator PANTS; the interaction results in enhanced RTN4-mediated inhibition of AMPA receptor clustering (By similarity). Interacts with GPR50 (PubMed:19699797).</text>
</comment>
<comment type="subunit">
    <molecule>Isoform B</molecule>
    <text evidence="1 10 12 13 15 16 20 25 26 27">Homodimer (PubMed:27786289). Interacts with BAD/Bcl-xl and BCL2. Interact with RTN3 (PubMed:12811824, PubMed:16979658). Interacts with NGBR (PubMed:16835300). Interacts with SPTLC1 (By similarity). Interacts with GRAMD4 (By similarity). Interacts with CDH5 (PubMed:21183689). Interacts with BACE1 and BACE2 (PubMed:15286784, PubMed:16965550). Interacts with REEP5 (PubMed:32075961). Interacts with RETREG3 (PubMed:33826365).</text>
</comment>
<comment type="subunit">
    <molecule>Isoform C</molecule>
    <text evidence="12 15 22">Interacts with BACE1 and BACE2 (PubMed:15286784, PubMed:16965550). Interacts with TMEM33 (PubMed:25612671).</text>
</comment>
<comment type="interaction">
    <interactant intactId="EBI-715945">
        <id>Q9NQC3</id>
    </interactant>
    <interactant intactId="EBI-714543">
        <id>Q15041</id>
        <label>ARL6IP1</label>
    </interactant>
    <organismsDiffer>false</organismsDiffer>
    <experiments>5</experiments>
</comment>
<comment type="interaction">
    <interactant intactId="EBI-715945">
        <id>Q9NQC3</id>
    </interactant>
    <interactant intactId="EBI-739994">
        <id>Q9Y5P4</id>
        <label>CERT1</label>
    </interactant>
    <organismsDiffer>false</organismsDiffer>
    <experiments>3</experiments>
</comment>
<comment type="interaction">
    <interactant intactId="EBI-715945">
        <id>Q9NQC3</id>
    </interactant>
    <interactant intactId="EBI-7962814">
        <id>Q9GZP9</id>
        <label>DERL2</label>
    </interactant>
    <organismsDiffer>false</organismsDiffer>
    <experiments>2</experiments>
</comment>
<comment type="interaction">
    <interactant intactId="EBI-715945">
        <id>Q9NQC3</id>
    </interactant>
    <interactant intactId="EBI-713635">
        <id>O43639</id>
        <label>NCK2</label>
    </interactant>
    <organismsDiffer>false</organismsDiffer>
    <experiments>2</experiments>
</comment>
<comment type="interaction">
    <interactant intactId="EBI-715945">
        <id>Q9NQC3</id>
    </interactant>
    <interactant intactId="EBI-2797962">
        <id>O75298</id>
        <label>RTN2</label>
    </interactant>
    <organismsDiffer>false</organismsDiffer>
    <experiments>3</experiments>
</comment>
<comment type="interaction">
    <interactant intactId="EBI-715945">
        <id>Q9NQC3</id>
    </interactant>
    <interactant intactId="EBI-740467">
        <id>O95197</id>
        <label>RTN3</label>
    </interactant>
    <organismsDiffer>false</organismsDiffer>
    <experiments>4</experiments>
</comment>
<comment type="interaction">
    <interactant intactId="EBI-715945">
        <id>Q9NQC3</id>
    </interactant>
    <interactant intactId="EBI-2822329">
        <id>Q13596</id>
        <label>SNX1</label>
    </interactant>
    <organismsDiffer>false</organismsDiffer>
    <experiments>3</experiments>
</comment>
<comment type="interaction">
    <interactant intactId="EBI-715945">
        <id>Q9NQC3</id>
    </interactant>
    <interactant intactId="EBI-725924">
        <id>Q9NRS6</id>
        <label>SNX15</label>
    </interactant>
    <organismsDiffer>false</organismsDiffer>
    <experiments>4</experiments>
</comment>
<comment type="interaction">
    <interactant intactId="EBI-715945">
        <id>Q9NQC3</id>
    </interactant>
    <interactant intactId="EBI-10238936">
        <id>Q17RD7</id>
        <label>SYT16</label>
    </interactant>
    <organismsDiffer>false</organismsDiffer>
    <experiments>5</experiments>
</comment>
<comment type="interaction">
    <interactant intactId="EBI-715945">
        <id>Q9NQC3</id>
    </interactant>
    <interactant intactId="EBI-2849569">
        <id>Q9BQ24</id>
        <label>ZFYVE21</label>
    </interactant>
    <organismsDiffer>false</organismsDiffer>
    <experiments>3</experiments>
</comment>
<comment type="interaction">
    <interactant intactId="EBI-715972">
        <id>Q9NQC3-1</id>
    </interactant>
    <interactant intactId="EBI-2410266">
        <id>Q8WXF7</id>
        <label>ATL1</label>
    </interactant>
    <organismsDiffer>false</organismsDiffer>
    <experiments>2</experiments>
</comment>
<comment type="interaction">
    <interactant intactId="EBI-10296096">
        <id>Q9NQC3-2</id>
    </interactant>
    <interactant intactId="EBI-2433297">
        <id>P56817-1</id>
        <label>BACE1</label>
    </interactant>
    <organismsDiffer>false</organismsDiffer>
    <experiments>3</experiments>
</comment>
<comment type="interaction">
    <interactant intactId="EBI-10296096">
        <id>Q9NQC3-2</id>
    </interactant>
    <interactant intactId="EBI-2849569">
        <id>Q9BQ24</id>
        <label>ZFYVE21</label>
    </interactant>
    <organismsDiffer>false</organismsDiffer>
    <experiments>3</experiments>
</comment>
<comment type="interaction">
    <interactant intactId="EBI-11526335">
        <id>Q9NQC3-3</id>
    </interactant>
    <interactant intactId="EBI-2433297">
        <id>P56817-1</id>
        <label>BACE1</label>
    </interactant>
    <organismsDiffer>false</organismsDiffer>
    <experiments>2</experiments>
</comment>
<comment type="interaction">
    <interactant intactId="EBI-17721653">
        <id>Q9NQC3-5</id>
    </interactant>
    <interactant intactId="EBI-11525735">
        <id>O95197-3</id>
        <label>RTN3</label>
    </interactant>
    <organismsDiffer>false</organismsDiffer>
    <experiments>3</experiments>
</comment>
<comment type="subcellular location">
    <molecule>Isoform A</molecule>
    <subcellularLocation>
        <location evidence="22 23 24 25">Endoplasmic reticulum membrane</location>
        <topology evidence="3">Multi-pass membrane protein</topology>
    </subcellularLocation>
    <subcellularLocation>
        <location>Cell membrane</location>
        <topology evidence="3">Multi-pass membrane protein</topology>
        <orientation evidence="25">Cytoplasmic side</orientation>
    </subcellularLocation>
    <subcellularLocation>
        <location evidence="1">Synapse</location>
    </subcellularLocation>
    <text evidence="22 24">Anchored to the membrane of the endoplasmic reticulum (ER) through 2 putative transmembrane domains. Localizes throughout the ER tubular network (PubMed:27619977). Co-localizes with TMEM33 at the ER sheets.</text>
</comment>
<comment type="subcellular location">
    <molecule>Isoform B</molecule>
    <subcellularLocation>
        <location evidence="25">Endoplasmic reticulum membrane</location>
        <topology evidence="3">Multi-pass membrane protein</topology>
    </subcellularLocation>
    <subcellularLocation>
        <location evidence="11">Cell membrane</location>
        <topology evidence="3">Multi-pass membrane protein</topology>
        <orientation evidence="11">Extracellular side</orientation>
    </subcellularLocation>
    <subcellularLocation>
        <location evidence="20">Cell junction</location>
    </subcellularLocation>
    <text evidence="20 25">Mainly located on endoplasmic reticulum tubules and sheet edges (PubMed:27786289). Upon ICAM1 engagement, redistributed toward endothelial junctions where interacts with CDH5 (PubMed:21183689).</text>
</comment>
<comment type="subcellular location">
    <molecule>Isoform C</molecule>
    <subcellularLocation>
        <location evidence="22">Endoplasmic reticulum membrane</location>
        <topology evidence="3">Multi-pass membrane protein</topology>
    </subcellularLocation>
</comment>
<comment type="alternative products">
    <event type="alternative splicing"/>
    <isoform>
        <id>Q9NQC3-1</id>
        <name>A</name>
        <name evidence="34 38">RTN4A</name>
        <name evidence="34 38">Nogo-A</name>
        <name evidence="32">RTN-xL</name>
        <sequence type="displayed"/>
    </isoform>
    <isoform>
        <id>Q9NQC3-2</id>
        <name>B</name>
        <name evidence="38">RTN4B</name>
        <name evidence="35">ASY</name>
        <name evidence="38">Nogo-B</name>
        <name evidence="32">RTN-xS</name>
        <name>Foocen-M</name>
        <name evidence="34">RTN4B1</name>
        <name evidence="34">Nogo-B1</name>
        <sequence type="described" ref="VSP_005655"/>
    </isoform>
    <isoform>
        <id>Q9NQC3-3</id>
        <name>C</name>
        <name evidence="34 38">RTN4C</name>
        <name evidence="34 38">Nogo-C</name>
        <name>Foocen-S</name>
        <sequence type="described" ref="VSP_005652 VSP_005653"/>
    </isoform>
    <isoform>
        <id>Q9NQC3-4</id>
        <name>6</name>
        <sequence type="described" ref="VSP_005654"/>
    </isoform>
    <isoform>
        <id>Q9NQC3-5</id>
        <name>B2</name>
        <name evidence="9">RTN4B2</name>
        <name evidence="34">Nogo-B2</name>
        <sequence type="described" ref="VSP_037113"/>
    </isoform>
    <isoform>
        <id>Q9NQC3-6</id>
        <name>D</name>
        <name>Rtn-T</name>
        <name evidence="9">RTN4Aa</name>
        <name evidence="9">RTN4Ab</name>
        <name evidence="9">RTN4D</name>
        <name evidence="9">RTN4E</name>
        <name evidence="9">RTN4F</name>
        <name evidence="9">RTN4G</name>
        <sequence type="described" ref="VSP_037112"/>
    </isoform>
</comment>
<comment type="tissue specificity">
    <text evidence="11 20">Isoform A: is specifically expressed in brain and testis and weakly in heart and skeletal muscle. Isoform B: widely expressed except for the liver. Highly expressed in endothelial cells and vascular smooth muscle cells, including blood vessels and mesenteric arteries (PubMed:15034570, PubMed:21183689). Isoform C: is expressed in brain, skeletal muscle and adipocytes. Isoform D is testis-specific.</text>
</comment>
<comment type="domain">
    <text evidence="2">Three regions, residues 59-172, 544-725 and the loop 66 amino acids, between the two transmembrane domains, known as Nogo-66 loop, appear to be responsible for the inhibitory effect on neurite outgrowth and the spreading of neurons. This Nogo-66 loop also mediates the binding of RTN4 to its receptor (By similarity).</text>
</comment>
<comment type="domain">
    <molecule>Isoform B</molecule>
    <text evidence="11">N-terminal part, called Am-Nogo-B(1-200), is the functional domain for RTN4B-mediated signaling in endothelial and vascular smooth muscle cells.</text>
</comment>
<comment type="sequence caution" evidence="43">
    <conflict type="frameshift">
        <sequence resource="EMBL-CDS" id="AAD39920"/>
    </conflict>
</comment>
<comment type="sequence caution" evidence="43">
    <conflict type="erroneous initiation">
        <sequence resource="EMBL-CDS" id="AAG43160"/>
    </conflict>
    <text>Truncated N-terminus.</text>
</comment>
<comment type="sequence caution" evidence="43">
    <conflict type="frameshift">
        <sequence resource="EMBL-CDS" id="AAG43160"/>
    </conflict>
</comment>
<comment type="sequence caution" evidence="43">
    <conflict type="erroneous initiation">
        <sequence resource="EMBL-CDS" id="BAA74909"/>
    </conflict>
    <text>Extended N-terminus.</text>
</comment>
<comment type="online information" name="Protein Spotlight">
    <link uri="https://www.proteinspotlight.org/back_issues/069"/>
    <text>Nerve regrowth: nipped by a no-go - Issue 69 of April 2006</text>
</comment>
<comment type="online information" name="Atlas of Genetics and Cytogenetics in Oncology and Haematology">
    <link uri="https://atlasgeneticsoncology.org/gene/42182/RTN4"/>
</comment>
<dbReference type="EMBL" id="AF087901">
    <property type="protein sequence ID" value="AAG12205.1"/>
    <property type="molecule type" value="mRNA"/>
</dbReference>
<dbReference type="EMBL" id="AF148537">
    <property type="protein sequence ID" value="AAG12176.1"/>
    <property type="molecule type" value="mRNA"/>
</dbReference>
<dbReference type="EMBL" id="AF148538">
    <property type="protein sequence ID" value="AAG12177.1"/>
    <property type="molecule type" value="mRNA"/>
</dbReference>
<dbReference type="EMBL" id="AJ251383">
    <property type="protein sequence ID" value="CAB99248.1"/>
    <property type="molecule type" value="mRNA"/>
</dbReference>
<dbReference type="EMBL" id="AJ251384">
    <property type="protein sequence ID" value="CAB99249.1"/>
    <property type="molecule type" value="mRNA"/>
</dbReference>
<dbReference type="EMBL" id="AJ251385">
    <property type="protein sequence ID" value="CAB99250.1"/>
    <property type="molecule type" value="mRNA"/>
</dbReference>
<dbReference type="EMBL" id="AB040462">
    <property type="protein sequence ID" value="BAB18927.1"/>
    <property type="molecule type" value="mRNA"/>
</dbReference>
<dbReference type="EMBL" id="AB040463">
    <property type="protein sequence ID" value="BAB18928.1"/>
    <property type="molecule type" value="mRNA"/>
</dbReference>
<dbReference type="EMBL" id="AF333336">
    <property type="protein sequence ID" value="AAK20831.1"/>
    <property type="molecule type" value="mRNA"/>
</dbReference>
<dbReference type="EMBL" id="AY102285">
    <property type="protein sequence ID" value="AAM64240.1"/>
    <property type="molecule type" value="Genomic_DNA"/>
</dbReference>
<dbReference type="EMBL" id="AY102285">
    <property type="protein sequence ID" value="AAM64241.1"/>
    <property type="molecule type" value="Genomic_DNA"/>
</dbReference>
<dbReference type="EMBL" id="AY102285">
    <property type="protein sequence ID" value="AAM64242.1"/>
    <property type="molecule type" value="Genomic_DNA"/>
</dbReference>
<dbReference type="EMBL" id="AY102285">
    <property type="protein sequence ID" value="AAM64243.1"/>
    <property type="molecule type" value="Genomic_DNA"/>
</dbReference>
<dbReference type="EMBL" id="AY102285">
    <property type="protein sequence ID" value="AAM64244.1"/>
    <property type="molecule type" value="Genomic_DNA"/>
</dbReference>
<dbReference type="EMBL" id="AY102276">
    <property type="protein sequence ID" value="AAM64245.1"/>
    <property type="molecule type" value="mRNA"/>
</dbReference>
<dbReference type="EMBL" id="AY102277">
    <property type="protein sequence ID" value="AAM64246.1"/>
    <property type="molecule type" value="mRNA"/>
</dbReference>
<dbReference type="EMBL" id="AY102278">
    <property type="protein sequence ID" value="AAM64247.1"/>
    <property type="molecule type" value="mRNA"/>
</dbReference>
<dbReference type="EMBL" id="AY102279">
    <property type="protein sequence ID" value="AAM64248.1"/>
    <property type="molecule type" value="mRNA"/>
</dbReference>
<dbReference type="EMBL" id="AY123245">
    <property type="protein sequence ID" value="AAM64249.1"/>
    <property type="molecule type" value="mRNA"/>
</dbReference>
<dbReference type="EMBL" id="AY123246">
    <property type="protein sequence ID" value="AAM64250.1"/>
    <property type="molecule type" value="mRNA"/>
</dbReference>
<dbReference type="EMBL" id="AY123247">
    <property type="protein sequence ID" value="AAM64251.1"/>
    <property type="molecule type" value="mRNA"/>
</dbReference>
<dbReference type="EMBL" id="AY123248">
    <property type="protein sequence ID" value="AAM64252.1"/>
    <property type="molecule type" value="mRNA"/>
</dbReference>
<dbReference type="EMBL" id="AY123249">
    <property type="protein sequence ID" value="AAM64253.1"/>
    <property type="molecule type" value="mRNA"/>
</dbReference>
<dbReference type="EMBL" id="AY123250">
    <property type="protein sequence ID" value="AAM64254.1"/>
    <property type="molecule type" value="mRNA"/>
</dbReference>
<dbReference type="EMBL" id="AB015639">
    <property type="protein sequence ID" value="BAA83712.1"/>
    <property type="molecule type" value="mRNA"/>
</dbReference>
<dbReference type="EMBL" id="AF077050">
    <property type="protein sequence ID" value="AAD27783.1"/>
    <property type="molecule type" value="mRNA"/>
</dbReference>
<dbReference type="EMBL" id="AF132047">
    <property type="protein sequence ID" value="AAD31021.1"/>
    <property type="molecule type" value="mRNA"/>
</dbReference>
<dbReference type="EMBL" id="AF132048">
    <property type="protein sequence ID" value="AAD31022.1"/>
    <property type="molecule type" value="mRNA"/>
</dbReference>
<dbReference type="EMBL" id="AF320999">
    <property type="protein sequence ID" value="AAG40878.1"/>
    <property type="molecule type" value="mRNA"/>
</dbReference>
<dbReference type="EMBL" id="AB020693">
    <property type="protein sequence ID" value="BAA74909.2"/>
    <property type="status" value="ALT_INIT"/>
    <property type="molecule type" value="mRNA"/>
</dbReference>
<dbReference type="EMBL" id="AF125103">
    <property type="protein sequence ID" value="AAD39920.1"/>
    <property type="status" value="ALT_FRAME"/>
    <property type="molecule type" value="mRNA"/>
</dbReference>
<dbReference type="EMBL" id="AF177332">
    <property type="protein sequence ID" value="AAG17976.1"/>
    <property type="molecule type" value="mRNA"/>
</dbReference>
<dbReference type="EMBL" id="AC013414">
    <property type="status" value="NOT_ANNOTATED_CDS"/>
    <property type="molecule type" value="Genomic_DNA"/>
</dbReference>
<dbReference type="EMBL" id="AC092461">
    <property type="status" value="NOT_ANNOTATED_CDS"/>
    <property type="molecule type" value="Genomic_DNA"/>
</dbReference>
<dbReference type="EMBL" id="AC093165">
    <property type="status" value="NOT_ANNOTATED_CDS"/>
    <property type="molecule type" value="Genomic_DNA"/>
</dbReference>
<dbReference type="EMBL" id="CH471053">
    <property type="protein sequence ID" value="EAX00115.1"/>
    <property type="molecule type" value="Genomic_DNA"/>
</dbReference>
<dbReference type="EMBL" id="CH471053">
    <property type="protein sequence ID" value="EAX00116.1"/>
    <property type="molecule type" value="Genomic_DNA"/>
</dbReference>
<dbReference type="EMBL" id="CH471053">
    <property type="protein sequence ID" value="EAX00117.1"/>
    <property type="molecule type" value="Genomic_DNA"/>
</dbReference>
<dbReference type="EMBL" id="CH471053">
    <property type="protein sequence ID" value="EAX00118.1"/>
    <property type="molecule type" value="Genomic_DNA"/>
</dbReference>
<dbReference type="EMBL" id="CH471053">
    <property type="protein sequence ID" value="EAX00119.1"/>
    <property type="molecule type" value="Genomic_DNA"/>
</dbReference>
<dbReference type="EMBL" id="CH471053">
    <property type="protein sequence ID" value="EAX00121.1"/>
    <property type="molecule type" value="Genomic_DNA"/>
</dbReference>
<dbReference type="EMBL" id="CH471053">
    <property type="protein sequence ID" value="EAX00122.1"/>
    <property type="molecule type" value="Genomic_DNA"/>
</dbReference>
<dbReference type="EMBL" id="CH471053">
    <property type="protein sequence ID" value="EAX00123.1"/>
    <property type="molecule type" value="Genomic_DNA"/>
</dbReference>
<dbReference type="EMBL" id="CH471053">
    <property type="protein sequence ID" value="EAX00124.1"/>
    <property type="molecule type" value="Genomic_DNA"/>
</dbReference>
<dbReference type="EMBL" id="CH471053">
    <property type="protein sequence ID" value="EAX00125.1"/>
    <property type="molecule type" value="Genomic_DNA"/>
</dbReference>
<dbReference type="EMBL" id="CH471053">
    <property type="protein sequence ID" value="EAX00127.1"/>
    <property type="molecule type" value="Genomic_DNA"/>
</dbReference>
<dbReference type="EMBL" id="CH471053">
    <property type="protein sequence ID" value="EAX00130.1"/>
    <property type="molecule type" value="Genomic_DNA"/>
</dbReference>
<dbReference type="EMBL" id="CH471053">
    <property type="protein sequence ID" value="EAX00132.1"/>
    <property type="molecule type" value="Genomic_DNA"/>
</dbReference>
<dbReference type="EMBL" id="BC001035">
    <property type="protein sequence ID" value="AAH01035.1"/>
    <property type="molecule type" value="mRNA"/>
</dbReference>
<dbReference type="EMBL" id="BC007109">
    <property type="protein sequence ID" value="AAH07109.1"/>
    <property type="molecule type" value="mRNA"/>
</dbReference>
<dbReference type="EMBL" id="BC010737">
    <property type="protein sequence ID" value="AAH10737.1"/>
    <property type="molecule type" value="mRNA"/>
</dbReference>
<dbReference type="EMBL" id="BC012619">
    <property type="protein sequence ID" value="AAH12619.1"/>
    <property type="molecule type" value="mRNA"/>
</dbReference>
<dbReference type="EMBL" id="BC014366">
    <property type="protein sequence ID" value="AAH14366.1"/>
    <property type="molecule type" value="mRNA"/>
</dbReference>
<dbReference type="EMBL" id="BC016165">
    <property type="protein sequence ID" value="AAH16165.1"/>
    <property type="molecule type" value="mRNA"/>
</dbReference>
<dbReference type="EMBL" id="BC026788">
    <property type="protein sequence ID" value="AAH26788.1"/>
    <property type="molecule type" value="mRNA"/>
</dbReference>
<dbReference type="EMBL" id="BC068991">
    <property type="protein sequence ID" value="AAH68991.1"/>
    <property type="molecule type" value="mRNA"/>
</dbReference>
<dbReference type="EMBL" id="BC150182">
    <property type="protein sequence ID" value="AAI50183.1"/>
    <property type="molecule type" value="mRNA"/>
</dbReference>
<dbReference type="EMBL" id="BC152425">
    <property type="protein sequence ID" value="AAI52426.1"/>
    <property type="molecule type" value="mRNA"/>
</dbReference>
<dbReference type="EMBL" id="BC152555">
    <property type="protein sequence ID" value="AAI52556.1"/>
    <property type="molecule type" value="mRNA"/>
</dbReference>
<dbReference type="EMBL" id="AF063601">
    <property type="protein sequence ID" value="AAG43160.1"/>
    <property type="status" value="ALT_SEQ"/>
    <property type="molecule type" value="mRNA"/>
</dbReference>
<dbReference type="CCDS" id="CCDS1851.1">
    <molecule id="Q9NQC3-2"/>
</dbReference>
<dbReference type="CCDS" id="CCDS1852.1">
    <molecule id="Q9NQC3-6"/>
</dbReference>
<dbReference type="CCDS" id="CCDS42683.1">
    <molecule id="Q9NQC3-5"/>
</dbReference>
<dbReference type="CCDS" id="CCDS42684.1">
    <molecule id="Q9NQC3-1"/>
</dbReference>
<dbReference type="CCDS" id="CCDS42685.1">
    <molecule id="Q9NQC3-3"/>
</dbReference>
<dbReference type="RefSeq" id="NP_001308788.1">
    <molecule id="Q9NQC3-6"/>
    <property type="nucleotide sequence ID" value="NM_001321859.2"/>
</dbReference>
<dbReference type="RefSeq" id="NP_001308789.1">
    <molecule id="Q9NQC3-6"/>
    <property type="nucleotide sequence ID" value="NM_001321860.1"/>
</dbReference>
<dbReference type="RefSeq" id="NP_001308790.1">
    <molecule id="Q9NQC3-6"/>
    <property type="nucleotide sequence ID" value="NM_001321861.2"/>
</dbReference>
<dbReference type="RefSeq" id="NP_001308791.1">
    <molecule id="Q9NQC3-6"/>
    <property type="nucleotide sequence ID" value="NM_001321862.2"/>
</dbReference>
<dbReference type="RefSeq" id="NP_001308792.1">
    <molecule id="Q9NQC3-6"/>
    <property type="nucleotide sequence ID" value="NM_001321863.2"/>
</dbReference>
<dbReference type="RefSeq" id="NP_001308833.1">
    <molecule id="Q9NQC3-6"/>
    <property type="nucleotide sequence ID" value="NM_001321904.2"/>
</dbReference>
<dbReference type="RefSeq" id="NP_008939.1">
    <molecule id="Q9NQC3-3"/>
    <property type="nucleotide sequence ID" value="NM_007008.3"/>
</dbReference>
<dbReference type="RefSeq" id="NP_065393.1">
    <molecule id="Q9NQC3-1"/>
    <property type="nucleotide sequence ID" value="NM_020532.5"/>
</dbReference>
<dbReference type="RefSeq" id="NP_722550.1">
    <molecule id="Q9NQC3-2"/>
    <property type="nucleotide sequence ID" value="NM_153828.3"/>
</dbReference>
<dbReference type="RefSeq" id="NP_997403.1">
    <molecule id="Q9NQC3-5"/>
    <property type="nucleotide sequence ID" value="NM_207520.2"/>
</dbReference>
<dbReference type="RefSeq" id="NP_997404.1">
    <molecule id="Q9NQC3-6"/>
    <property type="nucleotide sequence ID" value="NM_207521.2"/>
</dbReference>
<dbReference type="RefSeq" id="XP_005264491.1">
    <property type="nucleotide sequence ID" value="XM_005264434.3"/>
</dbReference>
<dbReference type="RefSeq" id="XP_016860007.1">
    <property type="nucleotide sequence ID" value="XM_017004518.1"/>
</dbReference>
<dbReference type="RefSeq" id="XP_016860008.1">
    <property type="nucleotide sequence ID" value="XM_017004519.1"/>
</dbReference>
<dbReference type="PDB" id="2G31">
    <property type="method" value="NMR"/>
    <property type="chains" value="A=1055-1114"/>
</dbReference>
<dbReference type="PDB" id="2JV5">
    <property type="method" value="NMR"/>
    <property type="chains" value="A=1055-1108"/>
</dbReference>
<dbReference type="PDBsum" id="2G31"/>
<dbReference type="PDBsum" id="2JV5"/>
<dbReference type="BMRB" id="Q9NQC3"/>
<dbReference type="SMR" id="Q9NQC3"/>
<dbReference type="BioGRID" id="121400">
    <property type="interactions" value="352"/>
</dbReference>
<dbReference type="CORUM" id="Q9NQC3"/>
<dbReference type="DIP" id="DIP-42003N"/>
<dbReference type="FunCoup" id="Q9NQC3">
    <property type="interactions" value="1158"/>
</dbReference>
<dbReference type="IntAct" id="Q9NQC3">
    <property type="interactions" value="209"/>
</dbReference>
<dbReference type="MINT" id="Q9NQC3"/>
<dbReference type="STRING" id="9606.ENSP00000337838"/>
<dbReference type="BindingDB" id="Q9NQC3"/>
<dbReference type="ChEMBL" id="CHEMBL3712895"/>
<dbReference type="GuidetoPHARMACOLOGY" id="2838"/>
<dbReference type="GlyGen" id="Q9NQC3">
    <property type="glycosylation" value="8 sites, 1 N-linked glycan (1 site), 1 O-linked glycan (5 sites)"/>
</dbReference>
<dbReference type="iPTMnet" id="Q9NQC3"/>
<dbReference type="MetOSite" id="Q9NQC3"/>
<dbReference type="PhosphoSitePlus" id="Q9NQC3"/>
<dbReference type="SwissPalm" id="Q9NQC3"/>
<dbReference type="BioMuta" id="RTN4"/>
<dbReference type="DMDM" id="17369290"/>
<dbReference type="jPOST" id="Q9NQC3"/>
<dbReference type="MassIVE" id="Q9NQC3"/>
<dbReference type="PaxDb" id="9606-ENSP00000337838"/>
<dbReference type="PeptideAtlas" id="Q9NQC3"/>
<dbReference type="ProteomicsDB" id="82133">
    <molecule id="Q9NQC3-1"/>
</dbReference>
<dbReference type="ProteomicsDB" id="82134">
    <molecule id="Q9NQC3-2"/>
</dbReference>
<dbReference type="ProteomicsDB" id="82135">
    <molecule id="Q9NQC3-3"/>
</dbReference>
<dbReference type="ProteomicsDB" id="82136">
    <molecule id="Q9NQC3-4"/>
</dbReference>
<dbReference type="ProteomicsDB" id="82137">
    <molecule id="Q9NQC3-5"/>
</dbReference>
<dbReference type="ProteomicsDB" id="82138">
    <molecule id="Q9NQC3-6"/>
</dbReference>
<dbReference type="Pumba" id="Q9NQC3"/>
<dbReference type="TopDownProteomics" id="Q9NQC3-2">
    <molecule id="Q9NQC3-2"/>
</dbReference>
<dbReference type="TopDownProteomics" id="Q9NQC3-3">
    <molecule id="Q9NQC3-3"/>
</dbReference>
<dbReference type="TopDownProteomics" id="Q9NQC3-4">
    <molecule id="Q9NQC3-4"/>
</dbReference>
<dbReference type="TopDownProteomics" id="Q9NQC3-5">
    <molecule id="Q9NQC3-5"/>
</dbReference>
<dbReference type="TopDownProteomics" id="Q9NQC3-6">
    <molecule id="Q9NQC3-6"/>
</dbReference>
<dbReference type="ABCD" id="Q9NQC3">
    <property type="antibodies" value="3 sequenced antibodies"/>
</dbReference>
<dbReference type="Antibodypedia" id="3949">
    <property type="antibodies" value="550 antibodies from 44 providers"/>
</dbReference>
<dbReference type="DNASU" id="57142"/>
<dbReference type="Ensembl" id="ENST00000317610.11">
    <molecule id="Q9NQC3-2"/>
    <property type="protein sequence ID" value="ENSP00000322147.7"/>
    <property type="gene ID" value="ENSG00000115310.19"/>
</dbReference>
<dbReference type="Ensembl" id="ENST00000337526.11">
    <molecule id="Q9NQC3-1"/>
    <property type="protein sequence ID" value="ENSP00000337838.6"/>
    <property type="gene ID" value="ENSG00000115310.19"/>
</dbReference>
<dbReference type="Ensembl" id="ENST00000357376.7">
    <molecule id="Q9NQC3-6"/>
    <property type="protein sequence ID" value="ENSP00000349944.3"/>
    <property type="gene ID" value="ENSG00000115310.19"/>
</dbReference>
<dbReference type="Ensembl" id="ENST00000357732.8">
    <molecule id="Q9NQC3-5"/>
    <property type="protein sequence ID" value="ENSP00000350365.4"/>
    <property type="gene ID" value="ENSG00000115310.19"/>
</dbReference>
<dbReference type="Ensembl" id="ENST00000394609.6">
    <molecule id="Q9NQC3-3"/>
    <property type="protein sequence ID" value="ENSP00000378107.2"/>
    <property type="gene ID" value="ENSG00000115310.19"/>
</dbReference>
<dbReference type="Ensembl" id="ENST00000394611.6">
    <molecule id="Q9NQC3-6"/>
    <property type="protein sequence ID" value="ENSP00000378109.2"/>
    <property type="gene ID" value="ENSG00000115310.19"/>
</dbReference>
<dbReference type="Ensembl" id="ENST00000404909.5">
    <molecule id="Q9NQC3-6"/>
    <property type="protein sequence ID" value="ENSP00000385650.1"/>
    <property type="gene ID" value="ENSG00000115310.19"/>
</dbReference>
<dbReference type="Ensembl" id="ENST00000405240.5">
    <molecule id="Q9NQC3-6"/>
    <property type="protein sequence ID" value="ENSP00000384471.1"/>
    <property type="gene ID" value="ENSG00000115310.19"/>
</dbReference>
<dbReference type="GeneID" id="57142"/>
<dbReference type="KEGG" id="hsa:57142"/>
<dbReference type="MANE-Select" id="ENST00000337526.11">
    <property type="protein sequence ID" value="ENSP00000337838.6"/>
    <property type="RefSeq nucleotide sequence ID" value="NM_020532.5"/>
    <property type="RefSeq protein sequence ID" value="NP_065393.1"/>
</dbReference>
<dbReference type="UCSC" id="uc002ryc.4">
    <molecule id="Q9NQC3-1"/>
    <property type="organism name" value="human"/>
</dbReference>
<dbReference type="AGR" id="HGNC:14085"/>
<dbReference type="CTD" id="57142"/>
<dbReference type="DisGeNET" id="57142"/>
<dbReference type="GeneCards" id="RTN4"/>
<dbReference type="HGNC" id="HGNC:14085">
    <property type="gene designation" value="RTN4"/>
</dbReference>
<dbReference type="HPA" id="ENSG00000115310">
    <property type="expression patterns" value="Low tissue specificity"/>
</dbReference>
<dbReference type="MIM" id="604475">
    <property type="type" value="gene"/>
</dbReference>
<dbReference type="neXtProt" id="NX_Q9NQC3"/>
<dbReference type="OpenTargets" id="ENSG00000115310"/>
<dbReference type="PharmGKB" id="PA34883"/>
<dbReference type="VEuPathDB" id="HostDB:ENSG00000115310"/>
<dbReference type="eggNOG" id="KOG1792">
    <property type="taxonomic scope" value="Eukaryota"/>
</dbReference>
<dbReference type="GeneTree" id="ENSGT00940000156568"/>
<dbReference type="HOGENOM" id="CLU_048580_2_1_1"/>
<dbReference type="InParanoid" id="Q9NQC3"/>
<dbReference type="OMA" id="DGQKKHW"/>
<dbReference type="OrthoDB" id="567788at2759"/>
<dbReference type="PAN-GO" id="Q9NQC3">
    <property type="GO annotations" value="6 GO annotations based on evolutionary models"/>
</dbReference>
<dbReference type="PhylomeDB" id="Q9NQC3"/>
<dbReference type="TreeFam" id="TF105431"/>
<dbReference type="PathwayCommons" id="Q9NQC3"/>
<dbReference type="Reactome" id="R-HSA-193634">
    <property type="pathway name" value="Axonal growth inhibition (RHOA activation)"/>
</dbReference>
<dbReference type="SignaLink" id="Q9NQC3"/>
<dbReference type="SIGNOR" id="Q9NQC3"/>
<dbReference type="BioGRID-ORCS" id="57142">
    <property type="hits" value="20 hits in 1183 CRISPR screens"/>
</dbReference>
<dbReference type="CD-CODE" id="FB4E32DD">
    <property type="entry name" value="Presynaptic clusters and postsynaptic densities"/>
</dbReference>
<dbReference type="ChiTaRS" id="RTN4">
    <property type="organism name" value="human"/>
</dbReference>
<dbReference type="EvolutionaryTrace" id="Q9NQC3"/>
<dbReference type="GeneWiki" id="Reticulon_4"/>
<dbReference type="GenomeRNAi" id="57142"/>
<dbReference type="Pharos" id="Q9NQC3">
    <property type="development level" value="Tbio"/>
</dbReference>
<dbReference type="PRO" id="PR:Q9NQC3"/>
<dbReference type="Proteomes" id="UP000005640">
    <property type="component" value="Chromosome 2"/>
</dbReference>
<dbReference type="RNAct" id="Q9NQC3">
    <property type="molecule type" value="protein"/>
</dbReference>
<dbReference type="Bgee" id="ENSG00000115310">
    <property type="expression patterns" value="Expressed in pons and 207 other cell types or tissues"/>
</dbReference>
<dbReference type="ExpressionAtlas" id="Q9NQC3">
    <property type="expression patterns" value="baseline and differential"/>
</dbReference>
<dbReference type="GO" id="GO:0070161">
    <property type="term" value="C:anchoring junction"/>
    <property type="evidence" value="ECO:0007669"/>
    <property type="project" value="UniProtKB-SubCell"/>
</dbReference>
<dbReference type="GO" id="GO:0030054">
    <property type="term" value="C:cell junction"/>
    <property type="evidence" value="ECO:0000314"/>
    <property type="project" value="UniProtKB"/>
</dbReference>
<dbReference type="GO" id="GO:0005783">
    <property type="term" value="C:endoplasmic reticulum"/>
    <property type="evidence" value="ECO:0000314"/>
    <property type="project" value="HPA"/>
</dbReference>
<dbReference type="GO" id="GO:0005789">
    <property type="term" value="C:endoplasmic reticulum membrane"/>
    <property type="evidence" value="ECO:0000314"/>
    <property type="project" value="UniProtKB"/>
</dbReference>
<dbReference type="GO" id="GO:0071782">
    <property type="term" value="C:endoplasmic reticulum tubular network"/>
    <property type="evidence" value="ECO:0000314"/>
    <property type="project" value="CAFA"/>
</dbReference>
<dbReference type="GO" id="GO:0098826">
    <property type="term" value="C:endoplasmic reticulum tubular network membrane"/>
    <property type="evidence" value="ECO:0000314"/>
    <property type="project" value="UniProtKB"/>
</dbReference>
<dbReference type="GO" id="GO:0098978">
    <property type="term" value="C:glutamatergic synapse"/>
    <property type="evidence" value="ECO:0007669"/>
    <property type="project" value="Ensembl"/>
</dbReference>
<dbReference type="GO" id="GO:0043005">
    <property type="term" value="C:neuron projection"/>
    <property type="evidence" value="ECO:0000318"/>
    <property type="project" value="GO_Central"/>
</dbReference>
<dbReference type="GO" id="GO:0043025">
    <property type="term" value="C:neuronal cell body"/>
    <property type="evidence" value="ECO:0007669"/>
    <property type="project" value="Ensembl"/>
</dbReference>
<dbReference type="GO" id="GO:0005635">
    <property type="term" value="C:nuclear envelope"/>
    <property type="evidence" value="ECO:0000314"/>
    <property type="project" value="UniProtKB"/>
</dbReference>
<dbReference type="GO" id="GO:0005886">
    <property type="term" value="C:plasma membrane"/>
    <property type="evidence" value="ECO:0000314"/>
    <property type="project" value="UniProtKB"/>
</dbReference>
<dbReference type="GO" id="GO:0014069">
    <property type="term" value="C:postsynaptic density"/>
    <property type="evidence" value="ECO:0000318"/>
    <property type="project" value="GO_Central"/>
</dbReference>
<dbReference type="GO" id="GO:0045202">
    <property type="term" value="C:synapse"/>
    <property type="evidence" value="ECO:0000250"/>
    <property type="project" value="UniProtKB"/>
</dbReference>
<dbReference type="GO" id="GO:0045296">
    <property type="term" value="F:cadherin binding"/>
    <property type="evidence" value="ECO:0007005"/>
    <property type="project" value="BHF-UCL"/>
</dbReference>
<dbReference type="GO" id="GO:0046872">
    <property type="term" value="F:metal ion binding"/>
    <property type="evidence" value="ECO:0000269"/>
    <property type="project" value="DisProt"/>
</dbReference>
<dbReference type="GO" id="GO:0042803">
    <property type="term" value="F:protein homodimerization activity"/>
    <property type="evidence" value="ECO:0000314"/>
    <property type="project" value="UniProtKB"/>
</dbReference>
<dbReference type="GO" id="GO:0003723">
    <property type="term" value="F:RNA binding"/>
    <property type="evidence" value="ECO:0007005"/>
    <property type="project" value="UniProtKB"/>
</dbReference>
<dbReference type="GO" id="GO:0031625">
    <property type="term" value="F:ubiquitin protein ligase binding"/>
    <property type="evidence" value="ECO:0000353"/>
    <property type="project" value="CAFA"/>
</dbReference>
<dbReference type="GO" id="GO:0006915">
    <property type="term" value="P:apoptotic process"/>
    <property type="evidence" value="ECO:0000303"/>
    <property type="project" value="UniProtKB"/>
</dbReference>
<dbReference type="GO" id="GO:0007413">
    <property type="term" value="P:axonal fasciculation"/>
    <property type="evidence" value="ECO:0000250"/>
    <property type="project" value="UniProtKB"/>
</dbReference>
<dbReference type="GO" id="GO:0001825">
    <property type="term" value="P:blastocyst formation"/>
    <property type="evidence" value="ECO:0007669"/>
    <property type="project" value="Ensembl"/>
</dbReference>
<dbReference type="GO" id="GO:0007420">
    <property type="term" value="P:brain development"/>
    <property type="evidence" value="ECO:0000318"/>
    <property type="project" value="GO_Central"/>
</dbReference>
<dbReference type="GO" id="GO:0060317">
    <property type="term" value="P:cardiac epithelial to mesenchymal transition"/>
    <property type="evidence" value="ECO:0007669"/>
    <property type="project" value="Ensembl"/>
</dbReference>
<dbReference type="GO" id="GO:0120078">
    <property type="term" value="P:cell adhesion involved in sprouting angiogenesis"/>
    <property type="evidence" value="ECO:0000314"/>
    <property type="project" value="UniProtKB"/>
</dbReference>
<dbReference type="GO" id="GO:0035441">
    <property type="term" value="P:cell migration involved in vasculogenesis"/>
    <property type="evidence" value="ECO:0000250"/>
    <property type="project" value="UniProtKB"/>
</dbReference>
<dbReference type="GO" id="GO:0071456">
    <property type="term" value="P:cellular response to hypoxia"/>
    <property type="evidence" value="ECO:0000250"/>
    <property type="project" value="UniProtKB"/>
</dbReference>
<dbReference type="GO" id="GO:0022009">
    <property type="term" value="P:central nervous system vasculogenesis"/>
    <property type="evidence" value="ECO:0000250"/>
    <property type="project" value="UniProtKB"/>
</dbReference>
<dbReference type="GO" id="GO:0021801">
    <property type="term" value="P:cerebral cortex radial glia-guided migration"/>
    <property type="evidence" value="ECO:0000250"/>
    <property type="project" value="UniProtKB"/>
</dbReference>
<dbReference type="GO" id="GO:0007029">
    <property type="term" value="P:endoplasmic reticulum organization"/>
    <property type="evidence" value="ECO:0000314"/>
    <property type="project" value="UniProtKB"/>
</dbReference>
<dbReference type="GO" id="GO:0071787">
    <property type="term" value="P:endoplasmic reticulum tubular network formation"/>
    <property type="evidence" value="ECO:0000314"/>
    <property type="project" value="UniProtKB"/>
</dbReference>
<dbReference type="GO" id="GO:1990809">
    <property type="term" value="P:endoplasmic reticulum tubular network membrane organization"/>
    <property type="evidence" value="ECO:0000315"/>
    <property type="project" value="UniProtKB"/>
</dbReference>
<dbReference type="GO" id="GO:0071786">
    <property type="term" value="P:endoplasmic reticulum tubular network organization"/>
    <property type="evidence" value="ECO:0000315"/>
    <property type="project" value="UniProtKB"/>
</dbReference>
<dbReference type="GO" id="GO:0090156">
    <property type="term" value="P:intracellular sphingolipid homeostasis"/>
    <property type="evidence" value="ECO:0007669"/>
    <property type="project" value="Ensembl"/>
</dbReference>
<dbReference type="GO" id="GO:0002523">
    <property type="term" value="P:leukocyte migration involved in inflammatory response"/>
    <property type="evidence" value="ECO:0000250"/>
    <property type="project" value="UniProtKB"/>
</dbReference>
<dbReference type="GO" id="GO:0050804">
    <property type="term" value="P:modulation of chemical synaptic transmission"/>
    <property type="evidence" value="ECO:0007669"/>
    <property type="project" value="Ensembl"/>
</dbReference>
<dbReference type="GO" id="GO:1902430">
    <property type="term" value="P:negative regulation of amyloid-beta formation"/>
    <property type="evidence" value="ECO:0000314"/>
    <property type="project" value="UniProtKB"/>
</dbReference>
<dbReference type="GO" id="GO:0030517">
    <property type="term" value="P:negative regulation of axon extension"/>
    <property type="evidence" value="ECO:0000314"/>
    <property type="project" value="UniProtKB"/>
</dbReference>
<dbReference type="GO" id="GO:0030308">
    <property type="term" value="P:negative regulation of cell growth"/>
    <property type="evidence" value="ECO:0000315"/>
    <property type="project" value="DFLAT"/>
</dbReference>
<dbReference type="GO" id="GO:2001213">
    <property type="term" value="P:negative regulation of vasculogenesis"/>
    <property type="evidence" value="ECO:0000250"/>
    <property type="project" value="UniProtKB"/>
</dbReference>
<dbReference type="GO" id="GO:0030182">
    <property type="term" value="P:neuron differentiation"/>
    <property type="evidence" value="ECO:0000318"/>
    <property type="project" value="GO_Central"/>
</dbReference>
<dbReference type="GO" id="GO:0051292">
    <property type="term" value="P:nuclear pore complex assembly"/>
    <property type="evidence" value="ECO:0000315"/>
    <property type="project" value="UniProtKB"/>
</dbReference>
<dbReference type="GO" id="GO:0045766">
    <property type="term" value="P:positive regulation of angiogenesis"/>
    <property type="evidence" value="ECO:0000250"/>
    <property type="project" value="UniProtKB"/>
</dbReference>
<dbReference type="GO" id="GO:1905653">
    <property type="term" value="P:positive regulation of artery morphogenesis"/>
    <property type="evidence" value="ECO:0000250"/>
    <property type="project" value="UniProtKB"/>
</dbReference>
<dbReference type="GO" id="GO:0010634">
    <property type="term" value="P:positive regulation of epithelial cell migration"/>
    <property type="evidence" value="ECO:0000315"/>
    <property type="project" value="CAFA"/>
</dbReference>
<dbReference type="GO" id="GO:1905580">
    <property type="term" value="P:positive regulation of ERBB3 signaling pathway"/>
    <property type="evidence" value="ECO:0000315"/>
    <property type="project" value="CAFA"/>
</dbReference>
<dbReference type="GO" id="GO:2000347">
    <property type="term" value="P:positive regulation of hepatocyte proliferation"/>
    <property type="evidence" value="ECO:0000250"/>
    <property type="project" value="UniProtKB"/>
</dbReference>
<dbReference type="GO" id="GO:0060907">
    <property type="term" value="P:positive regulation of macrophage cytokine production"/>
    <property type="evidence" value="ECO:0000250"/>
    <property type="project" value="UniProtKB"/>
</dbReference>
<dbReference type="GO" id="GO:1905523">
    <property type="term" value="P:positive regulation of macrophage migration"/>
    <property type="evidence" value="ECO:0000250"/>
    <property type="project" value="UniProtKB"/>
</dbReference>
<dbReference type="GO" id="GO:0033601">
    <property type="term" value="P:positive regulation of mammary gland epithelial cell proliferation"/>
    <property type="evidence" value="ECO:0000315"/>
    <property type="project" value="CAFA"/>
</dbReference>
<dbReference type="GO" id="GO:1902624">
    <property type="term" value="P:positive regulation of neutrophil migration"/>
    <property type="evidence" value="ECO:0000250"/>
    <property type="project" value="UniProtKB"/>
</dbReference>
<dbReference type="GO" id="GO:0051897">
    <property type="term" value="P:positive regulation of phosphatidylinositol 3-kinase/protein kinase B signal transduction"/>
    <property type="evidence" value="ECO:0000315"/>
    <property type="project" value="CAFA"/>
</dbReference>
<dbReference type="GO" id="GO:1905552">
    <property type="term" value="P:positive regulation of protein localization to endoplasmic reticulum"/>
    <property type="evidence" value="ECO:0000314"/>
    <property type="project" value="CAFA"/>
</dbReference>
<dbReference type="GO" id="GO:0035022">
    <property type="term" value="P:positive regulation of Rac protein signal transduction"/>
    <property type="evidence" value="ECO:0000250"/>
    <property type="project" value="UniProtKB"/>
</dbReference>
<dbReference type="GO" id="GO:0034165">
    <property type="term" value="P:positive regulation of toll-like receptor 9 signaling pathway"/>
    <property type="evidence" value="ECO:0000250"/>
    <property type="project" value="UniProtKB"/>
</dbReference>
<dbReference type="GO" id="GO:0061462">
    <property type="term" value="P:protein localization to lysosome"/>
    <property type="evidence" value="ECO:0000250"/>
    <property type="project" value="UniProtKB"/>
</dbReference>
<dbReference type="GO" id="GO:0050821">
    <property type="term" value="P:protein stabilization"/>
    <property type="evidence" value="ECO:0000315"/>
    <property type="project" value="CAFA"/>
</dbReference>
<dbReference type="GO" id="GO:0042981">
    <property type="term" value="P:regulation of apoptotic process"/>
    <property type="evidence" value="ECO:0000303"/>
    <property type="project" value="UniProtKB"/>
</dbReference>
<dbReference type="GO" id="GO:2000172">
    <property type="term" value="P:regulation of branching morphogenesis of a nerve"/>
    <property type="evidence" value="ECO:0000250"/>
    <property type="project" value="UniProtKB"/>
</dbReference>
<dbReference type="GO" id="GO:0030334">
    <property type="term" value="P:regulation of cell migration"/>
    <property type="evidence" value="ECO:0000314"/>
    <property type="project" value="MGI"/>
</dbReference>
<dbReference type="GO" id="GO:0150052">
    <property type="term" value="P:regulation of postsynapse assembly"/>
    <property type="evidence" value="ECO:0007669"/>
    <property type="project" value="Ensembl"/>
</dbReference>
<dbReference type="DisProt" id="DP01855">
    <molecule id="Q9NQC3-1"/>
</dbReference>
<dbReference type="FunFam" id="1.20.5.2480:FF:000001">
    <property type="entry name" value="Reticulon"/>
    <property type="match status" value="1"/>
</dbReference>
<dbReference type="Gene3D" id="1.20.5.2480">
    <property type="match status" value="1"/>
</dbReference>
<dbReference type="InterPro" id="IPR003388">
    <property type="entry name" value="Reticulon"/>
</dbReference>
<dbReference type="InterPro" id="IPR046964">
    <property type="entry name" value="RTN1-4"/>
</dbReference>
<dbReference type="PANTHER" id="PTHR45799:SF1">
    <property type="entry name" value="RETICULON-4"/>
    <property type="match status" value="1"/>
</dbReference>
<dbReference type="PANTHER" id="PTHR45799">
    <property type="entry name" value="RETICULON-LIKE PROTEIN"/>
    <property type="match status" value="1"/>
</dbReference>
<dbReference type="Pfam" id="PF02453">
    <property type="entry name" value="Reticulon"/>
    <property type="match status" value="1"/>
</dbReference>
<dbReference type="PROSITE" id="PS50845">
    <property type="entry name" value="RETICULON"/>
    <property type="match status" value="1"/>
</dbReference>
<evidence type="ECO:0000250" key="1">
    <source>
        <dbReference type="UniProtKB" id="Q99P72"/>
    </source>
</evidence>
<evidence type="ECO:0000250" key="2">
    <source>
        <dbReference type="UniProtKB" id="Q9JK11"/>
    </source>
</evidence>
<evidence type="ECO:0000255" key="3"/>
<evidence type="ECO:0000255" key="4">
    <source>
        <dbReference type="PROSITE-ProRule" id="PRU00170"/>
    </source>
</evidence>
<evidence type="ECO:0000256" key="5">
    <source>
        <dbReference type="SAM" id="MobiDB-lite"/>
    </source>
</evidence>
<evidence type="ECO:0000269" key="6">
    <source>
    </source>
</evidence>
<evidence type="ECO:0000269" key="7">
    <source>
    </source>
</evidence>
<evidence type="ECO:0000269" key="8">
    <source>
    </source>
</evidence>
<evidence type="ECO:0000269" key="9">
    <source>
    </source>
</evidence>
<evidence type="ECO:0000269" key="10">
    <source>
    </source>
</evidence>
<evidence type="ECO:0000269" key="11">
    <source>
    </source>
</evidence>
<evidence type="ECO:0000269" key="12">
    <source>
    </source>
</evidence>
<evidence type="ECO:0000269" key="13">
    <source>
    </source>
</evidence>
<evidence type="ECO:0000269" key="14">
    <source>
    </source>
</evidence>
<evidence type="ECO:0000269" key="15">
    <source>
    </source>
</evidence>
<evidence type="ECO:0000269" key="16">
    <source>
    </source>
</evidence>
<evidence type="ECO:0000269" key="17">
    <source>
    </source>
</evidence>
<evidence type="ECO:0000269" key="18">
    <source>
    </source>
</evidence>
<evidence type="ECO:0000269" key="19">
    <source>
    </source>
</evidence>
<evidence type="ECO:0000269" key="20">
    <source>
    </source>
</evidence>
<evidence type="ECO:0000269" key="21">
    <source>
    </source>
</evidence>
<evidence type="ECO:0000269" key="22">
    <source>
    </source>
</evidence>
<evidence type="ECO:0000269" key="23">
    <source>
    </source>
</evidence>
<evidence type="ECO:0000269" key="24">
    <source>
    </source>
</evidence>
<evidence type="ECO:0000269" key="25">
    <source>
    </source>
</evidence>
<evidence type="ECO:0000269" key="26">
    <source>
    </source>
</evidence>
<evidence type="ECO:0000269" key="27">
    <source>
    </source>
</evidence>
<evidence type="ECO:0000269" key="28">
    <source ref="16"/>
</evidence>
<evidence type="ECO:0000303" key="29">
    <source>
    </source>
</evidence>
<evidence type="ECO:0000303" key="30">
    <source>
    </source>
</evidence>
<evidence type="ECO:0000303" key="31">
    <source>
    </source>
</evidence>
<evidence type="ECO:0000303" key="32">
    <source>
    </source>
</evidence>
<evidence type="ECO:0000303" key="33">
    <source>
    </source>
</evidence>
<evidence type="ECO:0000303" key="34">
    <source>
    </source>
</evidence>
<evidence type="ECO:0000303" key="35">
    <source>
    </source>
</evidence>
<evidence type="ECO:0000303" key="36">
    <source>
    </source>
</evidence>
<evidence type="ECO:0000303" key="37">
    <source>
    </source>
</evidence>
<evidence type="ECO:0000303" key="38">
    <source>
    </source>
</evidence>
<evidence type="ECO:0000303" key="39">
    <source ref="6"/>
</evidence>
<evidence type="ECO:0000303" key="40">
    <source ref="7"/>
</evidence>
<evidence type="ECO:0000303" key="41">
    <source ref="8"/>
</evidence>
<evidence type="ECO:0000303" key="42">
    <source ref="9"/>
</evidence>
<evidence type="ECO:0000305" key="43"/>
<evidence type="ECO:0000312" key="44">
    <source>
        <dbReference type="HGNC" id="HGNC:14085"/>
    </source>
</evidence>
<evidence type="ECO:0007744" key="45">
    <source>
        <dbReference type="PDB" id="2G31"/>
    </source>
</evidence>
<evidence type="ECO:0007744" key="46">
    <source>
    </source>
</evidence>
<evidence type="ECO:0007744" key="47">
    <source>
    </source>
</evidence>
<evidence type="ECO:0007744" key="48">
    <source>
    </source>
</evidence>
<evidence type="ECO:0007744" key="49">
    <source>
    </source>
</evidence>
<evidence type="ECO:0007744" key="50">
    <source>
    </source>
</evidence>
<evidence type="ECO:0007744" key="51">
    <source>
    </source>
</evidence>
<evidence type="ECO:0007744" key="52">
    <source>
    </source>
</evidence>
<evidence type="ECO:0007744" key="53">
    <source>
    </source>
</evidence>
<evidence type="ECO:0007744" key="54">
    <source>
    </source>
</evidence>
<evidence type="ECO:0007744" key="55">
    <source>
    </source>
</evidence>
<evidence type="ECO:0007744" key="56">
    <source>
    </source>
</evidence>
<evidence type="ECO:0007829" key="57">
    <source>
        <dbReference type="PDB" id="2G31"/>
    </source>
</evidence>
<gene>
    <name evidence="44" type="primary">RTN4</name>
    <name type="synonym">KIAA0886</name>
    <name evidence="34" type="synonym">NOGO</name>
    <name type="ORF">My043</name>
    <name type="ORF">SP1507</name>
</gene>
<reference key="1">
    <citation type="journal article" date="2000" name="Cytogenet. Cell Genet.">
        <title>Assignment of the human reticulon 4 gene (RTN4) to chromosome 2p14--&gt;2p13 by radiation hybrid mapping.</title>
        <authorList>
            <person name="Yang J."/>
            <person name="Yu L."/>
            <person name="Bi A.D."/>
            <person name="Zhao S.-Y."/>
        </authorList>
    </citation>
    <scope>NUCLEOTIDE SEQUENCE [MRNA] (ISOFORMS A; B AND C)</scope>
</reference>
<reference key="2">
    <citation type="journal article" date="2000" name="Nature">
        <title>Inhibitor of neurite outgrowth in humans.</title>
        <authorList>
            <person name="Prinjha R."/>
            <person name="Moore S.E."/>
            <person name="Vinson M."/>
            <person name="Blake S."/>
            <person name="Morrow R."/>
            <person name="Christie G."/>
            <person name="Michalovich D."/>
            <person name="Simmons D.L."/>
            <person name="Walsh F.S."/>
        </authorList>
    </citation>
    <scope>NUCLEOTIDE SEQUENCE [MRNA] (ISOFORMS A; B AND C)</scope>
</reference>
<reference key="3">
    <citation type="journal article" date="2000" name="Oncogene">
        <title>A novel protein, RTN-XS, interacts with both Bcl-XL and Bcl-2 on endoplasmic reticulum and reduces their anti-apoptotic activity.</title>
        <authorList>
            <person name="Tagami S."/>
            <person name="Eguchi Y."/>
            <person name="Kinoshita M."/>
            <person name="Takeda M."/>
            <person name="Tsujimoto Y."/>
        </authorList>
    </citation>
    <scope>NUCLEOTIDE SEQUENCE [MRNA] (ISOFORMS A AND B)</scope>
    <scope>FUNCTION (ISOFORM B)</scope>
    <source>
        <tissue>Brain</tissue>
    </source>
</reference>
<reference key="4">
    <citation type="journal article" date="2002" name="Reproduction">
        <title>Expression of a novel reticulon-like gene in human testis.</title>
        <authorList>
            <person name="Zhou Z.M."/>
            <person name="Sha J.H."/>
            <person name="Li J.M."/>
            <person name="Lin M."/>
            <person name="Zhu H."/>
            <person name="Zhou Y.D."/>
            <person name="Wang L.R."/>
            <person name="Zhu H."/>
            <person name="Wang Y.Q."/>
            <person name="Zhou K.Y."/>
        </authorList>
    </citation>
    <scope>NUCLEOTIDE SEQUENCE [MRNA] (ISOFORM 6)</scope>
    <source>
        <tissue>Testis</tissue>
    </source>
</reference>
<reference key="5">
    <citation type="journal article" date="2003" name="J. Mol. Biol.">
        <title>Genomic structure and functional characterisation of the promoters of human and mouse nogo/rtn4.</title>
        <authorList>
            <person name="Oertle T."/>
            <person name="Huber C."/>
            <person name="van der Putten H."/>
            <person name="Schwab M.E."/>
        </authorList>
    </citation>
    <scope>NUCLEOTIDE SEQUENCE [GENOMIC DNA / MRNA] (ISOFORMS A; B; B2; C AND D)</scope>
    <scope>ALTERNATIVE SPLICING</scope>
</reference>
<reference key="6">
    <citation type="submission" date="1998-06" db="EMBL/GenBank/DDBJ databases">
        <title>Isolation of a cell death-inducing gene.</title>
        <authorList>
            <person name="Yutsudo M."/>
        </authorList>
    </citation>
    <scope>NUCLEOTIDE SEQUENCE [MRNA] (ISOFORM B)</scope>
    <source>
        <tissue>Fibroblast</tissue>
    </source>
</reference>
<reference key="7">
    <citation type="submission" date="1998-07" db="EMBL/GenBank/DDBJ databases">
        <title>Human neuroendocrine-specific protein C (NSP) homolog gene.</title>
        <authorList>
            <person name="Song H."/>
            <person name="Peng Y."/>
            <person name="Zhou J."/>
            <person name="Huang Q."/>
            <person name="Dai M."/>
            <person name="Mao Y.M."/>
            <person name="Yu Y."/>
            <person name="Xu X."/>
            <person name="Luo B."/>
            <person name="Hu R."/>
            <person name="Chen J."/>
        </authorList>
    </citation>
    <scope>NUCLEOTIDE SEQUENCE [MRNA] (ISOFORM C)</scope>
    <source>
        <tissue>Pituitary</tissue>
    </source>
</reference>
<reference key="8">
    <citation type="submission" date="1999-02" db="EMBL/GenBank/DDBJ databases">
        <title>Cloning of a member of the reticulon gene family in human.</title>
        <authorList>
            <person name="Ito T."/>
            <person name="Schwartz S.M."/>
        </authorList>
    </citation>
    <scope>NUCLEOTIDE SEQUENCE [MRNA] (ISOFORMS B AND C)</scope>
    <source>
        <tissue>Placenta</tissue>
        <tissue>Skeletal muscle</tissue>
    </source>
</reference>
<reference key="9">
    <citation type="submission" date="2000-11" db="EMBL/GenBank/DDBJ databases">
        <title>Developmentally-regulated alternative splicing in a novel Nogo-A.</title>
        <authorList>
            <person name="Jin W.-L."/>
            <person name="Ju G."/>
        </authorList>
    </citation>
    <scope>NUCLEOTIDE SEQUENCE [MRNA] (ISOFORM B2)</scope>
</reference>
<reference key="10">
    <citation type="journal article" date="1998" name="DNA Res.">
        <title>Prediction of the coding sequences of unidentified human genes. XII. The complete sequences of 100 new cDNA clones from brain which code for large proteins in vitro.</title>
        <authorList>
            <person name="Nagase T."/>
            <person name="Ishikawa K."/>
            <person name="Suyama M."/>
            <person name="Kikuno R."/>
            <person name="Hirosawa M."/>
            <person name="Miyajima N."/>
            <person name="Tanaka A."/>
            <person name="Kotani H."/>
            <person name="Nomura N."/>
            <person name="Ohara O."/>
        </authorList>
    </citation>
    <scope>NUCLEOTIDE SEQUENCE [LARGE SCALE MRNA] (ISOFORM A)</scope>
    <source>
        <tissue>Brain</tissue>
    </source>
</reference>
<reference key="11">
    <citation type="journal article" date="2000" name="Genome Res.">
        <title>Cloning and functional analysis of cDNAs with open reading frames for 300 previously undefined genes expressed in CD34+ hematopoietic stem/progenitor cells.</title>
        <authorList>
            <person name="Zhang Q.-H."/>
            <person name="Ye M."/>
            <person name="Wu X.-Y."/>
            <person name="Ren S.-X."/>
            <person name="Zhao M."/>
            <person name="Zhao C.-J."/>
            <person name="Fu G."/>
            <person name="Shen Y."/>
            <person name="Fan H.-Y."/>
            <person name="Lu G."/>
            <person name="Zhong M."/>
            <person name="Xu X.-R."/>
            <person name="Han Z.-G."/>
            <person name="Zhang J.-W."/>
            <person name="Tao J."/>
            <person name="Huang Q.-H."/>
            <person name="Zhou J."/>
            <person name="Hu G.-X."/>
            <person name="Gu J."/>
            <person name="Chen S.-J."/>
            <person name="Chen Z."/>
        </authorList>
    </citation>
    <scope>NUCLEOTIDE SEQUENCE [LARGE SCALE MRNA] (ISOFORM C)</scope>
    <source>
        <tissue>Umbilical cord blood</tissue>
    </source>
</reference>
<reference key="12">
    <citation type="journal article" date="2004" name="Proc. Natl. Acad. Sci. U.S.A.">
        <title>Large-scale cDNA transfection screening for genes related to cancer development and progression.</title>
        <authorList>
            <person name="Wan D."/>
            <person name="Gong Y."/>
            <person name="Qin W."/>
            <person name="Zhang P."/>
            <person name="Li J."/>
            <person name="Wei L."/>
            <person name="Zhou X."/>
            <person name="Li H."/>
            <person name="Qiu X."/>
            <person name="Zhong F."/>
            <person name="He L."/>
            <person name="Yu J."/>
            <person name="Yao G."/>
            <person name="Jiang H."/>
            <person name="Qian L."/>
            <person name="Yu Y."/>
            <person name="Shu H."/>
            <person name="Chen X."/>
            <person name="Xu H."/>
            <person name="Guo M."/>
            <person name="Pan Z."/>
            <person name="Chen Y."/>
            <person name="Ge C."/>
            <person name="Yang S."/>
            <person name="Gu J."/>
        </authorList>
    </citation>
    <scope>NUCLEOTIDE SEQUENCE [LARGE SCALE MRNA] (ISOFORM C)</scope>
</reference>
<reference key="13">
    <citation type="journal article" date="2005" name="Nature">
        <title>Generation and annotation of the DNA sequences of human chromosomes 2 and 4.</title>
        <authorList>
            <person name="Hillier L.W."/>
            <person name="Graves T.A."/>
            <person name="Fulton R.S."/>
            <person name="Fulton L.A."/>
            <person name="Pepin K.H."/>
            <person name="Minx P."/>
            <person name="Wagner-McPherson C."/>
            <person name="Layman D."/>
            <person name="Wylie K."/>
            <person name="Sekhon M."/>
            <person name="Becker M.C."/>
            <person name="Fewell G.A."/>
            <person name="Delehaunty K.D."/>
            <person name="Miner T.L."/>
            <person name="Nash W.E."/>
            <person name="Kremitzki C."/>
            <person name="Oddy L."/>
            <person name="Du H."/>
            <person name="Sun H."/>
            <person name="Bradshaw-Cordum H."/>
            <person name="Ali J."/>
            <person name="Carter J."/>
            <person name="Cordes M."/>
            <person name="Harris A."/>
            <person name="Isak A."/>
            <person name="van Brunt A."/>
            <person name="Nguyen C."/>
            <person name="Du F."/>
            <person name="Courtney L."/>
            <person name="Kalicki J."/>
            <person name="Ozersky P."/>
            <person name="Abbott S."/>
            <person name="Armstrong J."/>
            <person name="Belter E.A."/>
            <person name="Caruso L."/>
            <person name="Cedroni M."/>
            <person name="Cotton M."/>
            <person name="Davidson T."/>
            <person name="Desai A."/>
            <person name="Elliott G."/>
            <person name="Erb T."/>
            <person name="Fronick C."/>
            <person name="Gaige T."/>
            <person name="Haakenson W."/>
            <person name="Haglund K."/>
            <person name="Holmes A."/>
            <person name="Harkins R."/>
            <person name="Kim K."/>
            <person name="Kruchowski S.S."/>
            <person name="Strong C.M."/>
            <person name="Grewal N."/>
            <person name="Goyea E."/>
            <person name="Hou S."/>
            <person name="Levy A."/>
            <person name="Martinka S."/>
            <person name="Mead K."/>
            <person name="McLellan M.D."/>
            <person name="Meyer R."/>
            <person name="Randall-Maher J."/>
            <person name="Tomlinson C."/>
            <person name="Dauphin-Kohlberg S."/>
            <person name="Kozlowicz-Reilly A."/>
            <person name="Shah N."/>
            <person name="Swearengen-Shahid S."/>
            <person name="Snider J."/>
            <person name="Strong J.T."/>
            <person name="Thompson J."/>
            <person name="Yoakum M."/>
            <person name="Leonard S."/>
            <person name="Pearman C."/>
            <person name="Trani L."/>
            <person name="Radionenko M."/>
            <person name="Waligorski J.E."/>
            <person name="Wang C."/>
            <person name="Rock S.M."/>
            <person name="Tin-Wollam A.-M."/>
            <person name="Maupin R."/>
            <person name="Latreille P."/>
            <person name="Wendl M.C."/>
            <person name="Yang S.-P."/>
            <person name="Pohl C."/>
            <person name="Wallis J.W."/>
            <person name="Spieth J."/>
            <person name="Bieri T.A."/>
            <person name="Berkowicz N."/>
            <person name="Nelson J.O."/>
            <person name="Osborne J."/>
            <person name="Ding L."/>
            <person name="Meyer R."/>
            <person name="Sabo A."/>
            <person name="Shotland Y."/>
            <person name="Sinha P."/>
            <person name="Wohldmann P.E."/>
            <person name="Cook L.L."/>
            <person name="Hickenbotham M.T."/>
            <person name="Eldred J."/>
            <person name="Williams D."/>
            <person name="Jones T.A."/>
            <person name="She X."/>
            <person name="Ciccarelli F.D."/>
            <person name="Izaurralde E."/>
            <person name="Taylor J."/>
            <person name="Schmutz J."/>
            <person name="Myers R.M."/>
            <person name="Cox D.R."/>
            <person name="Huang X."/>
            <person name="McPherson J.D."/>
            <person name="Mardis E.R."/>
            <person name="Clifton S.W."/>
            <person name="Warren W.C."/>
            <person name="Chinwalla A.T."/>
            <person name="Eddy S.R."/>
            <person name="Marra M.A."/>
            <person name="Ovcharenko I."/>
            <person name="Furey T.S."/>
            <person name="Miller W."/>
            <person name="Eichler E.E."/>
            <person name="Bork P."/>
            <person name="Suyama M."/>
            <person name="Torrents D."/>
            <person name="Waterston R.H."/>
            <person name="Wilson R.K."/>
        </authorList>
    </citation>
    <scope>NUCLEOTIDE SEQUENCE [LARGE SCALE GENOMIC DNA]</scope>
</reference>
<reference key="14">
    <citation type="submission" date="2005-09" db="EMBL/GenBank/DDBJ databases">
        <authorList>
            <person name="Mural R.J."/>
            <person name="Istrail S."/>
            <person name="Sutton G.G."/>
            <person name="Florea L."/>
            <person name="Halpern A.L."/>
            <person name="Mobarry C.M."/>
            <person name="Lippert R."/>
            <person name="Walenz B."/>
            <person name="Shatkay H."/>
            <person name="Dew I."/>
            <person name="Miller J.R."/>
            <person name="Flanigan M.J."/>
            <person name="Edwards N.J."/>
            <person name="Bolanos R."/>
            <person name="Fasulo D."/>
            <person name="Halldorsson B.V."/>
            <person name="Hannenhalli S."/>
            <person name="Turner R."/>
            <person name="Yooseph S."/>
            <person name="Lu F."/>
            <person name="Nusskern D.R."/>
            <person name="Shue B.C."/>
            <person name="Zheng X.H."/>
            <person name="Zhong F."/>
            <person name="Delcher A.L."/>
            <person name="Huson D.H."/>
            <person name="Kravitz S.A."/>
            <person name="Mouchard L."/>
            <person name="Reinert K."/>
            <person name="Remington K.A."/>
            <person name="Clark A.G."/>
            <person name="Waterman M.S."/>
            <person name="Eichler E.E."/>
            <person name="Adams M.D."/>
            <person name="Hunkapiller M.W."/>
            <person name="Myers E.W."/>
            <person name="Venter J.C."/>
        </authorList>
    </citation>
    <scope>NUCLEOTIDE SEQUENCE [LARGE SCALE GENOMIC DNA]</scope>
</reference>
<reference key="15">
    <citation type="journal article" date="2004" name="Genome Res.">
        <title>The status, quality, and expansion of the NIH full-length cDNA project: the Mammalian Gene Collection (MGC).</title>
        <authorList>
            <consortium name="The MGC Project Team"/>
        </authorList>
    </citation>
    <scope>NUCLEOTIDE SEQUENCE [LARGE SCALE MRNA] (ISOFORMS B; C AND D)</scope>
    <source>
        <tissue>Brain</tissue>
        <tissue>Eye</tissue>
        <tissue>Kidney</tissue>
        <tissue>Ovary</tissue>
        <tissue>Pancreas</tissue>
        <tissue>Placenta</tissue>
        <tissue>Skeletal muscle</tissue>
    </source>
</reference>
<reference key="16">
    <citation type="submission" date="2010-01" db="UniProtKB">
        <authorList>
            <person name="Bienvenut W.V."/>
        </authorList>
    </citation>
    <scope>PROTEIN SEQUENCE OF 1-24; 92-104; 1075-1090 AND 1158-1171</scope>
    <scope>ACETYLATION AT MET-1</scope>
    <scope>PHOSPHORYLATION AT SER-15</scope>
    <scope>IDENTIFICATION BY MASS SPECTROMETRY</scope>
    <source>
        <tissue>Ovarian carcinoma</tissue>
    </source>
</reference>
<reference key="17">
    <citation type="submission" date="1998-05" db="EMBL/GenBank/DDBJ databases">
        <authorList>
            <person name="Mao Y.M."/>
            <person name="Xie Y."/>
            <person name="Zheng Z.H."/>
        </authorList>
    </citation>
    <scope>NUCLEOTIDE SEQUENCE [LARGE SCALE MRNA] OF 482-1192 (ISOFORMS A/B2)</scope>
    <source>
        <tissue>Fetal brain</tissue>
    </source>
</reference>
<reference key="18">
    <citation type="journal article" date="2000" name="Nature">
        <title>Identification of the Nogo inhibitor of axon regeneration as a Reticulon protein.</title>
        <authorList>
            <person name="GrandPre T."/>
            <person name="Nakamura F."/>
            <person name="Vartanian T."/>
            <person name="Strittmatter S.M."/>
        </authorList>
    </citation>
    <scope>TOPOLOGY</scope>
    <scope>FUNCTION (ISOFORM A)</scope>
    <source>
        <tissue>Brain</tissue>
    </source>
</reference>
<reference key="19">
    <citation type="journal article" date="2001" name="Nature">
        <title>Identification of a receptor mediating Nogo-66 inhibition of axonal regeneration.</title>
        <authorList>
            <person name="Fournier A.E."/>
            <person name="GrandPre T."/>
            <person name="Strittmatter S.M."/>
        </authorList>
    </citation>
    <scope>FUNCTION (ISOFORM A)</scope>
    <source>
        <tissue>Brain</tissue>
    </source>
</reference>
<reference key="20">
    <citation type="journal article" date="2002" name="J. Neurosci. Res.">
        <title>Nogos and the Nogo-66 receptor: factors inhibiting CNS neuron regeneration.</title>
        <authorList>
            <person name="Ng C.E.L."/>
            <person name="Tang B.L."/>
        </authorList>
    </citation>
    <scope>REVIEW</scope>
</reference>
<reference key="21">
    <citation type="journal article" date="2003" name="J. Cell. Physiol.">
        <title>Pro-apoptotic ASY/Nogo-B protein associates with ASYIP.</title>
        <authorList>
            <person name="Qi B."/>
            <person name="Qi Y."/>
            <person name="Watari A."/>
            <person name="Yoshioka N."/>
            <person name="Inoue H."/>
            <person name="Minemoto Y."/>
            <person name="Yamashita K."/>
            <person name="Sasagawa T."/>
            <person name="Yutsudo M."/>
        </authorList>
    </citation>
    <scope>INTERACTION WITH RTN3 (ISOFORM B)</scope>
</reference>
<reference key="22">
    <citation type="journal article" date="2004" name="Nat. Med.">
        <title>A new role for Nogo as a regulator of vascular remodeling.</title>
        <authorList>
            <person name="Acevedo L."/>
            <person name="Yu J."/>
            <person name="Erdjument-Bromage H."/>
            <person name="Miao R.Q."/>
            <person name="Kim J.E."/>
            <person name="Fulton D."/>
            <person name="Tempst P."/>
            <person name="Strittmatter S.M."/>
            <person name="Sessa W.C."/>
        </authorList>
    </citation>
    <scope>FUNCTION (ISOFORM B)</scope>
    <scope>TISSUE SPECIFICITY (ISOFORMS A AND B)</scope>
    <scope>SUBCELLULAR LOCATION (ISOFORM B)</scope>
    <scope>DOMAIN (ISOFORM B)</scope>
</reference>
<reference key="23">
    <citation type="journal article" date="2004" name="Nat. Med.">
        <title>Reticulon family members modulate BACE1 activity and amyloid-beta peptide generation.</title>
        <authorList>
            <person name="He W."/>
            <person name="Lu Y."/>
            <person name="Qahwash I."/>
            <person name="Hu X.-Y."/>
            <person name="Chang A."/>
            <person name="Yan R."/>
        </authorList>
    </citation>
    <scope>INTERACTION WITH BACE1</scope>
</reference>
<reference key="24">
    <citation type="journal article" date="2006" name="Cell">
        <title>Global, in vivo, and site-specific phosphorylation dynamics in signaling networks.</title>
        <authorList>
            <person name="Olsen J.V."/>
            <person name="Blagoev B."/>
            <person name="Gnad F."/>
            <person name="Macek B."/>
            <person name="Kumar C."/>
            <person name="Mortensen P."/>
            <person name="Mann M."/>
        </authorList>
    </citation>
    <scope>PHOSPHORYLATION [LARGE SCALE ANALYSIS] AT SER-7 AND SER-107</scope>
    <scope>IDENTIFICATION BY MASS SPECTROMETRY [LARGE SCALE ANALYSIS]</scope>
    <source>
        <tissue>Cervix carcinoma</tissue>
    </source>
</reference>
<reference key="25">
    <citation type="journal article" date="2006" name="Eur. J. Neurosci.">
        <title>Reticulons RTN3 and RTN4-B/C interact with BACE1 and inhibit its ability to produce amyloid beta-protein.</title>
        <authorList>
            <person name="Murayama K.S."/>
            <person name="Kametani F."/>
            <person name="Saito S."/>
            <person name="Kume H."/>
            <person name="Akiyama H."/>
            <person name="Araki W."/>
        </authorList>
    </citation>
    <scope>INTERACTION WITH BACE1 AND BACE2 (ISOFORMS B AND C)</scope>
    <scope>IDENTIFICATION BY MASS SPECTROMETRY</scope>
    <scope>FUNCTION (ISOFORMS B AND C)</scope>
</reference>
<reference key="26">
    <citation type="journal article" date="2006" name="J. Mol. Biol.">
        <title>Mapping of interaction domains mediating binding between BACE1 and RTN/Nogo proteins.</title>
        <authorList>
            <person name="He W."/>
            <person name="Hu X."/>
            <person name="Shi Q."/>
            <person name="Zhou X."/>
            <person name="Lu Y."/>
            <person name="Fisher C."/>
            <person name="Yan R."/>
        </authorList>
    </citation>
    <scope>INTERACTION WITH RTN3 (ISOFORM B)</scope>
</reference>
<reference key="27">
    <citation type="journal article" date="2006" name="Proc. Natl. Acad. Sci. U.S.A.">
        <title>Identification of a receptor necessary for Nogo-B stimulated chemotaxis and morphogenesis of endothelial cells.</title>
        <authorList>
            <person name="Miao R.Q."/>
            <person name="Gao Y."/>
            <person name="Harrison K.D."/>
            <person name="Prendergast J."/>
            <person name="Acevedo L.M."/>
            <person name="Yu J."/>
            <person name="Hu F."/>
            <person name="Strittmatter S.M."/>
            <person name="Sessa W.C."/>
        </authorList>
    </citation>
    <scope>INTERACTION WITH NGBR (ISOFORM B)</scope>
</reference>
<reference key="28">
    <citation type="journal article" date="2008" name="J. Neurosci.">
        <title>Genetic variants of Nogo-66 receptor with possible association to schizophrenia block myelin inhibition of axon growth.</title>
        <authorList>
            <person name="Budel S."/>
            <person name="Padukkavidana T."/>
            <person name="Liu B.P."/>
            <person name="Feng Z."/>
            <person name="Hu F."/>
            <person name="Johnson S."/>
            <person name="Lauren J."/>
            <person name="Park J.H."/>
            <person name="McGee A.W."/>
            <person name="Liao J."/>
            <person name="Stillman A."/>
            <person name="Kim J.E."/>
            <person name="Yang B.Z."/>
            <person name="Sodi S."/>
            <person name="Gelernter J."/>
            <person name="Zhao H."/>
            <person name="Hisama F."/>
            <person name="Arnsten A.F."/>
            <person name="Strittmatter S.M."/>
        </authorList>
    </citation>
    <scope>INTERACTS WITH RTN4R</scope>
</reference>
<reference key="29">
    <citation type="journal article" date="2008" name="Mol. Cell">
        <title>Kinase-selective enrichment enables quantitative phosphoproteomics of the kinome across the cell cycle.</title>
        <authorList>
            <person name="Daub H."/>
            <person name="Olsen J.V."/>
            <person name="Bairlein M."/>
            <person name="Gnad F."/>
            <person name="Oppermann F.S."/>
            <person name="Korner R."/>
            <person name="Greff Z."/>
            <person name="Keri G."/>
            <person name="Stemmann O."/>
            <person name="Mann M."/>
        </authorList>
    </citation>
    <scope>IDENTIFICATION BY MASS SPECTROMETRY [LARGE SCALE ANALYSIS]</scope>
    <source>
        <tissue>Cervix carcinoma</tissue>
    </source>
</reference>
<reference key="30">
    <citation type="journal article" date="2008" name="Proc. Natl. Acad. Sci. U.S.A.">
        <title>A quantitative atlas of mitotic phosphorylation.</title>
        <authorList>
            <person name="Dephoure N."/>
            <person name="Zhou C."/>
            <person name="Villen J."/>
            <person name="Beausoleil S.A."/>
            <person name="Bakalarski C.E."/>
            <person name="Elledge S.J."/>
            <person name="Gygi S.P."/>
        </authorList>
    </citation>
    <scope>PHOSPHORYLATION [LARGE SCALE ANALYSIS] AT SER-181 AND SER-182</scope>
    <scope>IDENTIFICATION BY MASS SPECTROMETRY [LARGE SCALE ANALYSIS]</scope>
    <source>
        <tissue>Cervix carcinoma</tissue>
    </source>
</reference>
<reference key="31">
    <citation type="journal article" date="2009" name="Anal. Chem.">
        <title>Lys-N and trypsin cover complementary parts of the phosphoproteome in a refined SCX-based approach.</title>
        <authorList>
            <person name="Gauci S."/>
            <person name="Helbig A.O."/>
            <person name="Slijper M."/>
            <person name="Krijgsveld J."/>
            <person name="Heck A.J."/>
            <person name="Mohammed S."/>
        </authorList>
    </citation>
    <scope>ACETYLATION [LARGE SCALE ANALYSIS] AT MET-1</scope>
    <scope>IDENTIFICATION BY MASS SPECTROMETRY [LARGE SCALE ANALYSIS]</scope>
</reference>
<reference key="32">
    <citation type="journal article" date="2009" name="Cell">
        <title>A class of dynamin-like GTPases involved in the generation of the tubular ER network.</title>
        <authorList>
            <person name="Hu J."/>
            <person name="Shibata Y."/>
            <person name="Zhu P.-P."/>
            <person name="Voss C."/>
            <person name="Rismanchi N."/>
            <person name="Prinz W.A."/>
            <person name="Rapoport T.A."/>
            <person name="Blackstone C."/>
        </authorList>
    </citation>
    <scope>INTERACTION WITH ATL1</scope>
</reference>
<reference key="33">
    <citation type="journal article" date="2009" name="Mol. Cell. Proteomics">
        <title>Large-scale proteomics analysis of the human kinome.</title>
        <authorList>
            <person name="Oppermann F.S."/>
            <person name="Gnad F."/>
            <person name="Olsen J.V."/>
            <person name="Hornberger R."/>
            <person name="Greff Z."/>
            <person name="Keri G."/>
            <person name="Mann M."/>
            <person name="Daub H."/>
        </authorList>
    </citation>
    <scope>ACETYLATION [LARGE SCALE ANALYSIS] AT MET-1</scope>
    <scope>IDENTIFICATION BY MASS SPECTROMETRY [LARGE SCALE ANALYSIS]</scope>
</reference>
<reference key="34">
    <citation type="journal article" date="2009" name="Sci. Signal.">
        <title>Quantitative phosphoproteomic analysis of T cell receptor signaling reveals system-wide modulation of protein-protein interactions.</title>
        <authorList>
            <person name="Mayya V."/>
            <person name="Lundgren D.H."/>
            <person name="Hwang S.-I."/>
            <person name="Rezaul K."/>
            <person name="Wu L."/>
            <person name="Eng J.K."/>
            <person name="Rodionov V."/>
            <person name="Han D.K."/>
        </authorList>
    </citation>
    <scope>IDENTIFICATION BY MASS SPECTROMETRY [LARGE SCALE ANALYSIS]</scope>
    <source>
        <tissue>Leukemic T-cell</tissue>
    </source>
</reference>
<reference key="35">
    <citation type="journal article" date="2009" name="Science">
        <title>Lysine acetylation targets protein complexes and co-regulates major cellular functions.</title>
        <authorList>
            <person name="Choudhary C."/>
            <person name="Kumar C."/>
            <person name="Gnad F."/>
            <person name="Nielsen M.L."/>
            <person name="Rehman M."/>
            <person name="Walther T.C."/>
            <person name="Olsen J.V."/>
            <person name="Mann M."/>
        </authorList>
    </citation>
    <scope>ACETYLATION [LARGE SCALE ANALYSIS] AT LYS-1104</scope>
    <scope>IDENTIFICATION BY MASS SPECTROMETRY [LARGE SCALE ANALYSIS]</scope>
</reference>
<reference key="36">
    <citation type="journal article" date="2009" name="Mol. Cell. Neurosci.">
        <title>GPR50 interacts with neuronal NOGO-A and affects neurite outgrowth.</title>
        <authorList>
            <person name="Gruenewald E."/>
            <person name="Kinnell H.L."/>
            <person name="Porteous D.J."/>
            <person name="Thomson P.A."/>
        </authorList>
    </citation>
    <scope>INTERACTION WITH GPR50 (ISOFORM A)</scope>
    <scope>FUNCTION (ISOFORM A)</scope>
</reference>
<reference key="37">
    <citation type="journal article" date="2010" name="Sci. Signal.">
        <title>Quantitative phosphoproteomics reveals widespread full phosphorylation site occupancy during mitosis.</title>
        <authorList>
            <person name="Olsen J.V."/>
            <person name="Vermeulen M."/>
            <person name="Santamaria A."/>
            <person name="Kumar C."/>
            <person name="Miller M.L."/>
            <person name="Jensen L.J."/>
            <person name="Gnad F."/>
            <person name="Cox J."/>
            <person name="Jensen T.S."/>
            <person name="Nigg E.A."/>
            <person name="Brunak S."/>
            <person name="Mann M."/>
        </authorList>
    </citation>
    <scope>ACETYLATION [LARGE SCALE ANALYSIS] AT MET-1</scope>
    <scope>PHOSPHORYLATION [LARGE SCALE ANALYSIS] AT SER-7 AND SER-15</scope>
    <scope>IDENTIFICATION BY MASS SPECTROMETRY [LARGE SCALE ANALYSIS]</scope>
    <source>
        <tissue>Cervix carcinoma</tissue>
    </source>
</reference>
<reference key="38">
    <citation type="journal article" date="2011" name="Blood">
        <title>Endothelial reticulon-4B (Nogo-B) regulates ICAM-1-mediated leukocyte transmigration and acute inflammation.</title>
        <authorList>
            <person name="Di Lorenzo A."/>
            <person name="Manes T.D."/>
            <person name="Davalos A."/>
            <person name="Wright P.L."/>
            <person name="Sessa W.C."/>
        </authorList>
    </citation>
    <scope>FUNCTION (ISOFORM B)</scope>
    <scope>SUBCELLULAR LOCATION (ISOFORM B)</scope>
    <scope>INTERACTION WITH CDH5 (ISOFORM B)</scope>
    <scope>TISSUE SPECIFICITY</scope>
</reference>
<reference key="39">
    <citation type="journal article" date="2011" name="BMC Syst. Biol.">
        <title>Initial characterization of the human central proteome.</title>
        <authorList>
            <person name="Burkard T.R."/>
            <person name="Planyavsky M."/>
            <person name="Kaupe I."/>
            <person name="Breitwieser F.P."/>
            <person name="Buerckstuemmer T."/>
            <person name="Bennett K.L."/>
            <person name="Superti-Furga G."/>
            <person name="Colinge J."/>
        </authorList>
    </citation>
    <scope>IDENTIFICATION BY MASS SPECTROMETRY [LARGE SCALE ANALYSIS]</scope>
</reference>
<reference key="40">
    <citation type="journal article" date="2011" name="Sci. Signal.">
        <title>System-wide temporal characterization of the proteome and phosphoproteome of human embryonic stem cell differentiation.</title>
        <authorList>
            <person name="Rigbolt K.T."/>
            <person name="Prokhorova T.A."/>
            <person name="Akimov V."/>
            <person name="Henningsen J."/>
            <person name="Johansen P.T."/>
            <person name="Kratchmarova I."/>
            <person name="Kassem M."/>
            <person name="Mann M."/>
            <person name="Olsen J.V."/>
            <person name="Blagoev B."/>
        </authorList>
    </citation>
    <scope>ACETYLATION [LARGE SCALE ANALYSIS] AT MET-1</scope>
    <scope>PHOSPHORYLATION [LARGE SCALE ANALYSIS] AT SER-15 AND SER-107</scope>
    <scope>IDENTIFICATION BY MASS SPECTROMETRY [LARGE SCALE ANALYSIS]</scope>
</reference>
<reference key="41">
    <citation type="journal article" date="2012" name="Mol. Cell. Proteomics">
        <title>Comparative large-scale characterisation of plant vs. mammal proteins reveals similar and idiosyncratic N-alpha acetylation features.</title>
        <authorList>
            <person name="Bienvenut W.V."/>
            <person name="Sumpton D."/>
            <person name="Martinez A."/>
            <person name="Lilla S."/>
            <person name="Espagne C."/>
            <person name="Meinnel T."/>
            <person name="Giglione C."/>
        </authorList>
    </citation>
    <scope>ACETYLATION [LARGE SCALE ANALYSIS] AT MET-1</scope>
    <scope>IDENTIFICATION BY MASS SPECTROMETRY [LARGE SCALE ANALYSIS]</scope>
</reference>
<reference key="42">
    <citation type="journal article" date="2012" name="Proc. Natl. Acad. Sci. U.S.A.">
        <title>N-terminal acetylome analyses and functional insights of the N-terminal acetyltransferase NatB.</title>
        <authorList>
            <person name="Van Damme P."/>
            <person name="Lasa M."/>
            <person name="Polevoda B."/>
            <person name="Gazquez C."/>
            <person name="Elosegui-Artola A."/>
            <person name="Kim D.S."/>
            <person name="De Juan-Pardo E."/>
            <person name="Demeyer K."/>
            <person name="Hole K."/>
            <person name="Larrea E."/>
            <person name="Timmerman E."/>
            <person name="Prieto J."/>
            <person name="Arnesen T."/>
            <person name="Sherman F."/>
            <person name="Gevaert K."/>
            <person name="Aldabe R."/>
        </authorList>
    </citation>
    <scope>ACETYLATION [LARGE SCALE ANALYSIS] AT MET-1</scope>
    <scope>IDENTIFICATION BY MASS SPECTROMETRY [LARGE SCALE ANALYSIS]</scope>
</reference>
<reference key="43">
    <citation type="journal article" date="2013" name="J. Proteome Res.">
        <title>Toward a comprehensive characterization of a human cancer cell phosphoproteome.</title>
        <authorList>
            <person name="Zhou H."/>
            <person name="Di Palma S."/>
            <person name="Preisinger C."/>
            <person name="Peng M."/>
            <person name="Polat A.N."/>
            <person name="Heck A.J."/>
            <person name="Mohammed S."/>
        </authorList>
    </citation>
    <scope>PHOSPHORYLATION [LARGE SCALE ANALYSIS] AT SER-7; SER-15; SER-181 AND SER-991</scope>
    <scope>IDENTIFICATION BY MASS SPECTROMETRY [LARGE SCALE ANALYSIS]</scope>
    <source>
        <tissue>Cervix carcinoma</tissue>
        <tissue>Erythroleukemia</tissue>
    </source>
</reference>
<reference key="44">
    <citation type="journal article" date="2014" name="Biochem. J.">
        <title>Arl6IP1 has the ability to shape the mammalian ER membrane in a reticulon-like fashion.</title>
        <authorList>
            <person name="Yamamoto Y."/>
            <person name="Yoshida A."/>
            <person name="Miyazaki N."/>
            <person name="Iwasaki K."/>
            <person name="Sakisaka T."/>
        </authorList>
    </citation>
    <scope>FUNCTION (ISOFORM C)</scope>
</reference>
<reference key="45">
    <citation type="journal article" date="2014" name="J. Proteomics">
        <title>An enzyme assisted RP-RPLC approach for in-depth analysis of human liver phosphoproteome.</title>
        <authorList>
            <person name="Bian Y."/>
            <person name="Song C."/>
            <person name="Cheng K."/>
            <person name="Dong M."/>
            <person name="Wang F."/>
            <person name="Huang J."/>
            <person name="Sun D."/>
            <person name="Wang L."/>
            <person name="Ye M."/>
            <person name="Zou H."/>
        </authorList>
    </citation>
    <scope>IDENTIFICATION BY MASS SPECTROMETRY [LARGE SCALE ANALYSIS]</scope>
    <source>
        <tissue>Liver</tissue>
    </source>
</reference>
<reference key="46">
    <citation type="journal article" date="2014" name="Kobe J. Med. Sci.">
        <title>Identification and characterization of TMEM33 as a reticulon-binding protein.</title>
        <authorList>
            <person name="Urade T."/>
            <person name="Yamamoto Y."/>
            <person name="Zhang X."/>
            <person name="Ku Y."/>
            <person name="Sakisaka T."/>
        </authorList>
    </citation>
    <scope>FUNCTION (ISOFORM C)</scope>
    <scope>SUBCELLULAR LOCATION (ISOFORM C)</scope>
    <scope>INTERACTION WITH TMEM33 (ISOFORM C)</scope>
</reference>
<reference key="47">
    <citation type="journal article" date="2015" name="Proteomics">
        <title>N-terminome analysis of the human mitochondrial proteome.</title>
        <authorList>
            <person name="Vaca Jacome A.S."/>
            <person name="Rabilloud T."/>
            <person name="Schaeffer-Reiss C."/>
            <person name="Rompais M."/>
            <person name="Ayoub D."/>
            <person name="Lane L."/>
            <person name="Bairoch A."/>
            <person name="Van Dorsselaer A."/>
            <person name="Carapito C."/>
        </authorList>
    </citation>
    <scope>ACETYLATION [LARGE SCALE ANALYSIS] AT MET-1</scope>
    <scope>IDENTIFICATION BY MASS SPECTROMETRY [LARGE SCALE ANALYSIS]</scope>
</reference>
<reference key="48">
    <citation type="journal article" date="2016" name="Elife">
        <title>Cooperation of the ER-shaping proteins atlastin, lunapark, and reticulons to generate a tubular membrane network.</title>
        <authorList>
            <person name="Wang S."/>
            <person name="Tukachinsky H."/>
            <person name="Romano F.B."/>
            <person name="Rapoport T.A."/>
        </authorList>
    </citation>
    <scope>FUNCTION (ISOFORM A)</scope>
    <scope>SUBCELLULAR LOCATION (ISOFORM A)</scope>
</reference>
<reference key="49">
    <citation type="journal article" date="2016" name="J. Cell Sci.">
        <title>Transmembrane protein TMEM170A is a novel regulator of ER and NE morphogenesis in human cells.</title>
        <authorList>
            <person name="Christodoulou A."/>
            <person name="Santarella-Mellwig R."/>
            <person name="Santama N."/>
            <person name="Mattaj I.W."/>
        </authorList>
    </citation>
    <scope>FUNCTION</scope>
    <scope>SUBCELLULAR LOCATION</scope>
    <scope>INTERACTION WITH TMEM170A</scope>
</reference>
<reference key="50">
    <citation type="journal article" date="2016" name="Sci. Rep.">
        <title>NOGO-A/RTN4A and NOGO-B/RTN4B are simultaneously expressed in epithelial, fibroblast and neuronal cells and maintain ER morphology.</title>
        <authorList>
            <person name="Raemoe O."/>
            <person name="Kumar D."/>
            <person name="Gucciardo E."/>
            <person name="Joensuu M."/>
            <person name="Saarekas M."/>
            <person name="Vihinen H."/>
            <person name="Belevich I."/>
            <person name="Smolander O.P."/>
            <person name="Qian K."/>
            <person name="Auvinen P."/>
            <person name="Jokitalo E."/>
        </authorList>
    </citation>
    <scope>FUNCTION (ISOFORM B)</scope>
    <scope>SUBCELLULAR LOCATION (ISOFORMS A AND B)</scope>
    <scope>TISSUE SPECIFICITY</scope>
    <scope>SUBUNIT (ISOFORM B)</scope>
</reference>
<reference key="51">
    <citation type="journal article" date="2020" name="Nat. Commun.">
        <title>REEP5 depletion causes sarco-endoplasmic reticulum vacuolization and cardiac functional defects.</title>
        <authorList>
            <person name="Lee S.H."/>
            <person name="Hadipour-Lakmehsari S."/>
            <person name="Murthy H.R."/>
            <person name="Gibb N."/>
            <person name="Miyake T."/>
            <person name="Teng A.C.T."/>
            <person name="Cosme J."/>
            <person name="Yu J.C."/>
            <person name="Moon M."/>
            <person name="Lim S."/>
            <person name="Wong V."/>
            <person name="Liu P."/>
            <person name="Billia F."/>
            <person name="Fernandez-Gonzalez R."/>
            <person name="Stagljar I."/>
            <person name="Sharma P."/>
            <person name="Kislinger T."/>
            <person name="Scott I.C."/>
            <person name="Gramolini A.O."/>
        </authorList>
    </citation>
    <scope>INTERACTION WITH REEP5</scope>
</reference>
<reference key="52">
    <citation type="journal article" date="2021" name="Mol. Biol. Cell">
        <title>RTN4B interacting protein FAM134C promotes ER membrane curvature and has a functional role in autophagy.</title>
        <authorList>
            <person name="Kumar D."/>
            <person name="Lak B."/>
            <person name="Suntio T."/>
            <person name="Vihinen H."/>
            <person name="Belevich I."/>
            <person name="Viita T."/>
            <person name="Xiaonan L."/>
            <person name="Vartiainen A."/>
            <person name="Vartiainen M."/>
            <person name="Varjosalo M."/>
            <person name="Jokitalo E."/>
        </authorList>
    </citation>
    <scope>INTERACTION WITH RETREG3 (ISOFORM B)</scope>
</reference>
<reference evidence="45" key="53">
    <citation type="journal article" date="2006" name="Protein Sci.">
        <title>Nogo goes in the pure water: solution structure of Nogo-60 and design of the structured and buffer-soluble Nogo-54 for enhancing CNS regeneration.</title>
        <authorList>
            <person name="Li M."/>
            <person name="Liu J."/>
            <person name="Song J."/>
        </authorList>
    </citation>
    <scope>STRUCTURE BY NMR OF 1055-1114</scope>
</reference>
<reference key="54">
    <citation type="journal article" date="2006" name="Science">
        <title>The consensus coding sequences of human breast and colorectal cancers.</title>
        <authorList>
            <person name="Sjoeblom T."/>
            <person name="Jones S."/>
            <person name="Wood L.D."/>
            <person name="Parsons D.W."/>
            <person name="Lin J."/>
            <person name="Barber T.D."/>
            <person name="Mandelker D."/>
            <person name="Leary R.J."/>
            <person name="Ptak J."/>
            <person name="Silliman N."/>
            <person name="Szabo S."/>
            <person name="Buckhaults P."/>
            <person name="Farrell C."/>
            <person name="Meeh P."/>
            <person name="Markowitz S.D."/>
            <person name="Willis J."/>
            <person name="Dawson D."/>
            <person name="Willson J.K.V."/>
            <person name="Gazdar A.F."/>
            <person name="Hartigan J."/>
            <person name="Wu L."/>
            <person name="Liu C."/>
            <person name="Parmigiani G."/>
            <person name="Park B.H."/>
            <person name="Bachman K.E."/>
            <person name="Papadopoulos N."/>
            <person name="Vogelstein B."/>
            <person name="Kinzler K.W."/>
            <person name="Velculescu V.E."/>
        </authorList>
    </citation>
    <scope>VARIANT [LARGE SCALE ANALYSIS] VAL-429</scope>
</reference>
<keyword id="KW-0002">3D-structure</keyword>
<keyword id="KW-0007">Acetylation</keyword>
<keyword id="KW-0025">Alternative splicing</keyword>
<keyword id="KW-0965">Cell junction</keyword>
<keyword id="KW-1003">Cell membrane</keyword>
<keyword id="KW-0903">Direct protein sequencing</keyword>
<keyword id="KW-0256">Endoplasmic reticulum</keyword>
<keyword id="KW-0472">Membrane</keyword>
<keyword id="KW-0524">Neurogenesis</keyword>
<keyword id="KW-0597">Phosphoprotein</keyword>
<keyword id="KW-1267">Proteomics identification</keyword>
<keyword id="KW-1185">Reference proteome</keyword>
<keyword id="KW-0770">Synapse</keyword>
<keyword id="KW-0812">Transmembrane</keyword>
<keyword id="KW-1133">Transmembrane helix</keyword>
<protein>
    <recommendedName>
        <fullName evidence="43">Reticulon-4</fullName>
    </recommendedName>
    <alternativeName>
        <fullName>Foocen</fullName>
    </alternativeName>
    <alternativeName>
        <fullName>Neurite outgrowth inhibitor</fullName>
        <shortName evidence="34">Nogo protein</shortName>
    </alternativeName>
    <alternativeName>
        <fullName>Neuroendocrine-specific protein</fullName>
        <shortName>NSP</shortName>
    </alternativeName>
    <alternativeName>
        <fullName>Neuroendocrine-specific protein C homolog</fullName>
    </alternativeName>
    <alternativeName>
        <fullName>RTN-x</fullName>
    </alternativeName>
    <alternativeName>
        <fullName>Reticulon-5</fullName>
    </alternativeName>
</protein>
<name>RTN4_HUMAN</name>
<accession>Q9NQC3</accession>
<accession>O94962</accession>
<accession>Q7L7Q5</accession>
<accession>Q7L7Q6</accession>
<accession>Q7L7Q8</accession>
<accession>Q8IUA4</accession>
<accession>Q96B16</accession>
<accession>Q9BXG5</accession>
<accession>Q9H212</accession>
<accession>Q9H3I3</accession>
<accession>Q9UQ42</accession>
<accession>Q9Y293</accession>
<accession>Q9Y2Y7</accession>
<accession>Q9Y5U6</accession>